<organism>
    <name type="scientific">Homo sapiens</name>
    <name type="common">Human</name>
    <dbReference type="NCBI Taxonomy" id="9606"/>
    <lineage>
        <taxon>Eukaryota</taxon>
        <taxon>Metazoa</taxon>
        <taxon>Chordata</taxon>
        <taxon>Craniata</taxon>
        <taxon>Vertebrata</taxon>
        <taxon>Euteleostomi</taxon>
        <taxon>Mammalia</taxon>
        <taxon>Eutheria</taxon>
        <taxon>Euarchontoglires</taxon>
        <taxon>Primates</taxon>
        <taxon>Haplorrhini</taxon>
        <taxon>Catarrhini</taxon>
        <taxon>Hominidae</taxon>
        <taxon>Homo</taxon>
    </lineage>
</organism>
<sequence>MSTAVLENPGLGRKLSDFGQETSYIEDNCNQNGAISLIFSLKEEVGALAKVLRLFEENDVNLTHIESRPSRLKKDEYEFFTHLDKRSLPALTNIIKILRHDIGATVHELSRDKKKDTVPWFPRTIQELDRFANQILSYGAELDADHPGFKDPVYRARRKQFADIAYNYRHGQPIPRVEYMEEEKKTWGTVFKTLKSLYKTHACYEYNHIFPLLEKYCGFHEDNIPQLEDVSQFLQTCTGFRLRPVAGLLSSRDFLGGLAFRVFHCTQYIRHGSKPMYTPEPDICHELLGHVPLFSDRSFAQFSQEIGLASLGAPDEYIEKLATIYWFTVEFGLCKQGDSIKAYGAGLLSSFGELQYCLSEKPKLLPLELEKTAIQNYTVTEFQPLYYVAESFNDAKEKVRNFAATIPRPFSVRYDPYTQRIEVLDNTQQLKILADSINSEIGILCSALQKIK</sequence>
<dbReference type="EC" id="1.14.16.1" evidence="22 24"/>
<dbReference type="EMBL" id="K03020">
    <property type="protein sequence ID" value="AAA60082.1"/>
    <property type="molecule type" value="mRNA"/>
</dbReference>
<dbReference type="EMBL" id="U49897">
    <property type="protein sequence ID" value="AAC51772.1"/>
    <property type="molecule type" value="mRNA"/>
</dbReference>
<dbReference type="EMBL" id="S61296">
    <property type="protein sequence ID" value="AAD13926.1"/>
    <property type="molecule type" value="mRNA"/>
</dbReference>
<dbReference type="EMBL" id="BC026251">
    <property type="protein sequence ID" value="AAH26251.1"/>
    <property type="molecule type" value="mRNA"/>
</dbReference>
<dbReference type="CCDS" id="CCDS9092.1"/>
<dbReference type="PIR" id="A00508">
    <property type="entry name" value="WHHUF"/>
</dbReference>
<dbReference type="RefSeq" id="NP_000268.1">
    <property type="nucleotide sequence ID" value="NM_000277.3"/>
</dbReference>
<dbReference type="RefSeq" id="NP_001341233.1">
    <property type="nucleotide sequence ID" value="NM_001354304.2"/>
</dbReference>
<dbReference type="PDB" id="1DMW">
    <property type="method" value="X-ray"/>
    <property type="resolution" value="2.00 A"/>
    <property type="chains" value="A=118-424"/>
</dbReference>
<dbReference type="PDB" id="1J8T">
    <property type="method" value="X-ray"/>
    <property type="resolution" value="1.70 A"/>
    <property type="chains" value="A=103-427"/>
</dbReference>
<dbReference type="PDB" id="1J8U">
    <property type="method" value="X-ray"/>
    <property type="resolution" value="1.50 A"/>
    <property type="chains" value="A=103-427"/>
</dbReference>
<dbReference type="PDB" id="1KW0">
    <property type="method" value="X-ray"/>
    <property type="resolution" value="2.50 A"/>
    <property type="chains" value="A=103-427"/>
</dbReference>
<dbReference type="PDB" id="1LRM">
    <property type="method" value="X-ray"/>
    <property type="resolution" value="2.10 A"/>
    <property type="chains" value="A=103-427"/>
</dbReference>
<dbReference type="PDB" id="1MMK">
    <property type="method" value="X-ray"/>
    <property type="resolution" value="2.00 A"/>
    <property type="chains" value="A=103-427"/>
</dbReference>
<dbReference type="PDB" id="1MMT">
    <property type="method" value="X-ray"/>
    <property type="resolution" value="2.00 A"/>
    <property type="chains" value="A=103-427"/>
</dbReference>
<dbReference type="PDB" id="1PAH">
    <property type="method" value="X-ray"/>
    <property type="resolution" value="2.00 A"/>
    <property type="chains" value="A=117-424"/>
</dbReference>
<dbReference type="PDB" id="1TDW">
    <property type="method" value="X-ray"/>
    <property type="resolution" value="2.10 A"/>
    <property type="chains" value="A=117-424"/>
</dbReference>
<dbReference type="PDB" id="1TG2">
    <property type="method" value="X-ray"/>
    <property type="resolution" value="2.20 A"/>
    <property type="chains" value="A=117-424"/>
</dbReference>
<dbReference type="PDB" id="2PAH">
    <property type="method" value="X-ray"/>
    <property type="resolution" value="3.10 A"/>
    <property type="chains" value="A/B=118-452"/>
</dbReference>
<dbReference type="PDB" id="3PAH">
    <property type="method" value="X-ray"/>
    <property type="resolution" value="2.00 A"/>
    <property type="chains" value="A=117-424"/>
</dbReference>
<dbReference type="PDB" id="4ANP">
    <property type="method" value="X-ray"/>
    <property type="resolution" value="2.11 A"/>
    <property type="chains" value="A=104-427"/>
</dbReference>
<dbReference type="PDB" id="4PAH">
    <property type="method" value="X-ray"/>
    <property type="resolution" value="2.00 A"/>
    <property type="chains" value="A=117-424"/>
</dbReference>
<dbReference type="PDB" id="5FII">
    <property type="method" value="X-ray"/>
    <property type="resolution" value="1.80 A"/>
    <property type="chains" value="A/B/C/D=19-118"/>
</dbReference>
<dbReference type="PDB" id="5PAH">
    <property type="method" value="X-ray"/>
    <property type="resolution" value="2.10 A"/>
    <property type="chains" value="A=117-424"/>
</dbReference>
<dbReference type="PDB" id="6HPO">
    <property type="method" value="X-ray"/>
    <property type="resolution" value="1.67 A"/>
    <property type="chains" value="A=1-452"/>
</dbReference>
<dbReference type="PDB" id="6HYC">
    <property type="method" value="X-ray"/>
    <property type="resolution" value="3.18 A"/>
    <property type="chains" value="A/B/C/D=1-452"/>
</dbReference>
<dbReference type="PDB" id="6N1K">
    <property type="method" value="X-ray"/>
    <property type="resolution" value="3.06 A"/>
    <property type="chains" value="A/B/C/D=2-452"/>
</dbReference>
<dbReference type="PDB" id="6PAH">
    <property type="method" value="X-ray"/>
    <property type="resolution" value="2.15 A"/>
    <property type="chains" value="A=117-424"/>
</dbReference>
<dbReference type="PDBsum" id="1DMW"/>
<dbReference type="PDBsum" id="1J8T"/>
<dbReference type="PDBsum" id="1J8U"/>
<dbReference type="PDBsum" id="1KW0"/>
<dbReference type="PDBsum" id="1LRM"/>
<dbReference type="PDBsum" id="1MMK"/>
<dbReference type="PDBsum" id="1MMT"/>
<dbReference type="PDBsum" id="1PAH"/>
<dbReference type="PDBsum" id="1TDW"/>
<dbReference type="PDBsum" id="1TG2"/>
<dbReference type="PDBsum" id="2PAH"/>
<dbReference type="PDBsum" id="3PAH"/>
<dbReference type="PDBsum" id="4ANP"/>
<dbReference type="PDBsum" id="4PAH"/>
<dbReference type="PDBsum" id="5FII"/>
<dbReference type="PDBsum" id="5PAH"/>
<dbReference type="PDBsum" id="6HPO"/>
<dbReference type="PDBsum" id="6HYC"/>
<dbReference type="PDBsum" id="6N1K"/>
<dbReference type="PDBsum" id="6PAH"/>
<dbReference type="EMDB" id="EMD-4605"/>
<dbReference type="SASBDB" id="P00439"/>
<dbReference type="SMR" id="P00439"/>
<dbReference type="BioGRID" id="111090">
    <property type="interactions" value="9"/>
</dbReference>
<dbReference type="CORUM" id="P00439"/>
<dbReference type="DIP" id="DIP-58927N"/>
<dbReference type="FunCoup" id="P00439">
    <property type="interactions" value="750"/>
</dbReference>
<dbReference type="IntAct" id="P00439">
    <property type="interactions" value="5"/>
</dbReference>
<dbReference type="MINT" id="P00439"/>
<dbReference type="STRING" id="9606.ENSP00000448059"/>
<dbReference type="BindingDB" id="P00439"/>
<dbReference type="ChEMBL" id="CHEMBL3076"/>
<dbReference type="DrugBank" id="DB03673">
    <property type="generic name" value="beta-2-Thienyl-L-alanine"/>
</dbReference>
<dbReference type="DrugBank" id="DB04339">
    <property type="generic name" value="Carbocisteine"/>
</dbReference>
<dbReference type="DrugBank" id="DB06778">
    <property type="generic name" value="Cupric sulfate"/>
</dbReference>
<dbReference type="DrugBank" id="DB04419">
    <property type="generic name" value="D-norleucine"/>
</dbReference>
<dbReference type="DrugBank" id="DB06262">
    <property type="generic name" value="Droxidopa"/>
</dbReference>
<dbReference type="DrugBank" id="DB04400">
    <property type="generic name" value="L-erythro-7,8-dihydrobiopterin"/>
</dbReference>
<dbReference type="DrugBank" id="DB00368">
    <property type="generic name" value="Norepinephrine"/>
</dbReference>
<dbReference type="DrugBank" id="DB12839">
    <property type="generic name" value="Pegvaliase"/>
</dbReference>
<dbReference type="DrugBank" id="DB00120">
    <property type="generic name" value="Phenylalanine"/>
</dbReference>
<dbReference type="DrugBank" id="DB02562">
    <property type="generic name" value="Quinonoid 7,8-Tetrahydrobiopterin"/>
</dbReference>
<dbReference type="DrugBank" id="DB00360">
    <property type="generic name" value="Sapropterin"/>
</dbReference>
<dbReference type="DrugCentral" id="P00439"/>
<dbReference type="GuidetoPHARMACOLOGY" id="1240"/>
<dbReference type="iPTMnet" id="P00439"/>
<dbReference type="PhosphoSitePlus" id="P00439"/>
<dbReference type="BioMuta" id="PAH"/>
<dbReference type="DMDM" id="129973"/>
<dbReference type="jPOST" id="P00439"/>
<dbReference type="MassIVE" id="P00439"/>
<dbReference type="PaxDb" id="9606-ENSP00000448059"/>
<dbReference type="PeptideAtlas" id="P00439"/>
<dbReference type="ProteomicsDB" id="51249"/>
<dbReference type="Antibodypedia" id="30481">
    <property type="antibodies" value="285 antibodies from 31 providers"/>
</dbReference>
<dbReference type="DNASU" id="5053"/>
<dbReference type="Ensembl" id="ENST00000553106.6">
    <property type="protein sequence ID" value="ENSP00000448059.1"/>
    <property type="gene ID" value="ENSG00000171759.10"/>
</dbReference>
<dbReference type="GeneID" id="5053"/>
<dbReference type="KEGG" id="hsa:5053"/>
<dbReference type="MANE-Select" id="ENST00000553106.6">
    <property type="protein sequence ID" value="ENSP00000448059.1"/>
    <property type="RefSeq nucleotide sequence ID" value="NM_000277.3"/>
    <property type="RefSeq protein sequence ID" value="NP_000268.1"/>
</dbReference>
<dbReference type="UCSC" id="uc001tjq.2">
    <property type="organism name" value="human"/>
</dbReference>
<dbReference type="AGR" id="HGNC:8582"/>
<dbReference type="CTD" id="5053"/>
<dbReference type="DisGeNET" id="5053"/>
<dbReference type="GeneCards" id="PAH"/>
<dbReference type="GeneReviews" id="PAH"/>
<dbReference type="HGNC" id="HGNC:8582">
    <property type="gene designation" value="PAH"/>
</dbReference>
<dbReference type="HPA" id="ENSG00000171759">
    <property type="expression patterns" value="Group enriched (kidney, liver)"/>
</dbReference>
<dbReference type="MalaCards" id="PAH"/>
<dbReference type="MIM" id="261600">
    <property type="type" value="phenotype"/>
</dbReference>
<dbReference type="MIM" id="612349">
    <property type="type" value="gene"/>
</dbReference>
<dbReference type="neXtProt" id="NX_P00439"/>
<dbReference type="OpenTargets" id="ENSG00000171759"/>
<dbReference type="Orphanet" id="79254">
    <property type="disease" value="Classic phenylketonuria"/>
</dbReference>
<dbReference type="Orphanet" id="2209">
    <property type="disease" value="Maternal phenylketonuria syndrome"/>
</dbReference>
<dbReference type="Orphanet" id="79651">
    <property type="disease" value="Mild hyperphenylalaninemia"/>
</dbReference>
<dbReference type="Orphanet" id="79253">
    <property type="disease" value="Mild phenylketonuria"/>
</dbReference>
<dbReference type="Orphanet" id="293284">
    <property type="disease" value="Tetrahydrobiopterin-responsive hyperphenylalaninemia/phenylketonuria"/>
</dbReference>
<dbReference type="PharmGKB" id="PA32911"/>
<dbReference type="VEuPathDB" id="HostDB:ENSG00000171759"/>
<dbReference type="eggNOG" id="KOG3820">
    <property type="taxonomic scope" value="Eukaryota"/>
</dbReference>
<dbReference type="GeneTree" id="ENSGT00950000182885"/>
<dbReference type="HOGENOM" id="CLU_023198_0_1_1"/>
<dbReference type="InParanoid" id="P00439"/>
<dbReference type="OMA" id="FHDEVYR"/>
<dbReference type="OrthoDB" id="983542at2759"/>
<dbReference type="PAN-GO" id="P00439">
    <property type="GO annotations" value="2 GO annotations based on evolutionary models"/>
</dbReference>
<dbReference type="PhylomeDB" id="P00439"/>
<dbReference type="TreeFam" id="TF313327"/>
<dbReference type="BioCyc" id="MetaCyc:HS10374-MONOMER"/>
<dbReference type="BRENDA" id="1.14.16.1">
    <property type="organism ID" value="2681"/>
</dbReference>
<dbReference type="PathwayCommons" id="P00439"/>
<dbReference type="Reactome" id="R-HSA-2160456">
    <property type="pathway name" value="Phenylketonuria"/>
</dbReference>
<dbReference type="Reactome" id="R-HSA-8964208">
    <property type="pathway name" value="Phenylalanine metabolism"/>
</dbReference>
<dbReference type="SABIO-RK" id="P00439"/>
<dbReference type="SignaLink" id="P00439"/>
<dbReference type="SIGNOR" id="P00439"/>
<dbReference type="UniPathway" id="UPA00139">
    <property type="reaction ID" value="UER00337"/>
</dbReference>
<dbReference type="BioGRID-ORCS" id="5053">
    <property type="hits" value="8 hits in 1162 CRISPR screens"/>
</dbReference>
<dbReference type="ChiTaRS" id="PAH">
    <property type="organism name" value="human"/>
</dbReference>
<dbReference type="EvolutionaryTrace" id="P00439"/>
<dbReference type="GeneWiki" id="Phenylalanine_hydroxylase"/>
<dbReference type="GenomeRNAi" id="5053"/>
<dbReference type="Pharos" id="P00439">
    <property type="development level" value="Tclin"/>
</dbReference>
<dbReference type="PRO" id="PR:P00439"/>
<dbReference type="Proteomes" id="UP000005640">
    <property type="component" value="Chromosome 12"/>
</dbReference>
<dbReference type="RNAct" id="P00439">
    <property type="molecule type" value="protein"/>
</dbReference>
<dbReference type="Bgee" id="ENSG00000171759">
    <property type="expression patterns" value="Expressed in right lobe of liver and 124 other cell types or tissues"/>
</dbReference>
<dbReference type="ExpressionAtlas" id="P00439">
    <property type="expression patterns" value="baseline and differential"/>
</dbReference>
<dbReference type="GO" id="GO:0005829">
    <property type="term" value="C:cytosol"/>
    <property type="evidence" value="ECO:0000304"/>
    <property type="project" value="Reactome"/>
</dbReference>
<dbReference type="GO" id="GO:0005506">
    <property type="term" value="F:iron ion binding"/>
    <property type="evidence" value="ECO:0007669"/>
    <property type="project" value="InterPro"/>
</dbReference>
<dbReference type="GO" id="GO:0004505">
    <property type="term" value="F:phenylalanine 4-monooxygenase activity"/>
    <property type="evidence" value="ECO:0000314"/>
    <property type="project" value="CACAO"/>
</dbReference>
<dbReference type="GO" id="GO:0008652">
    <property type="term" value="P:amino acid biosynthetic process"/>
    <property type="evidence" value="ECO:0000304"/>
    <property type="project" value="ProtInc"/>
</dbReference>
<dbReference type="GO" id="GO:0042423">
    <property type="term" value="P:catecholamine biosynthetic process"/>
    <property type="evidence" value="ECO:0000303"/>
    <property type="project" value="BHF-UCL"/>
</dbReference>
<dbReference type="GO" id="GO:0006559">
    <property type="term" value="P:L-phenylalanine catabolic process"/>
    <property type="evidence" value="ECO:0007669"/>
    <property type="project" value="UniProtKB-UniPathway"/>
</dbReference>
<dbReference type="GO" id="GO:0006571">
    <property type="term" value="P:tyrosine biosynthetic process"/>
    <property type="evidence" value="ECO:0000318"/>
    <property type="project" value="GO_Central"/>
</dbReference>
<dbReference type="CDD" id="cd04931">
    <property type="entry name" value="ACT_PAH"/>
    <property type="match status" value="1"/>
</dbReference>
<dbReference type="CDD" id="cd03347">
    <property type="entry name" value="eu_PheOH"/>
    <property type="match status" value="1"/>
</dbReference>
<dbReference type="FunFam" id="1.10.800.10:FF:000003">
    <property type="entry name" value="Phenylalanine-4-hydroxylase"/>
    <property type="match status" value="1"/>
</dbReference>
<dbReference type="Gene3D" id="1.10.800.10">
    <property type="entry name" value="Aromatic amino acid hydroxylase"/>
    <property type="match status" value="1"/>
</dbReference>
<dbReference type="InterPro" id="IPR045865">
    <property type="entry name" value="ACT-like_dom_sf"/>
</dbReference>
<dbReference type="InterPro" id="IPR002912">
    <property type="entry name" value="ACT_dom"/>
</dbReference>
<dbReference type="InterPro" id="IPR001273">
    <property type="entry name" value="ArAA_hydroxylase"/>
</dbReference>
<dbReference type="InterPro" id="IPR018301">
    <property type="entry name" value="ArAA_hydroxylase_Fe/CU_BS"/>
</dbReference>
<dbReference type="InterPro" id="IPR036951">
    <property type="entry name" value="ArAA_hydroxylase_sf"/>
</dbReference>
<dbReference type="InterPro" id="IPR036329">
    <property type="entry name" value="Aro-AA_hydroxylase_C_sf"/>
</dbReference>
<dbReference type="InterPro" id="IPR019774">
    <property type="entry name" value="Aromatic-AA_hydroxylase_C"/>
</dbReference>
<dbReference type="InterPro" id="IPR041912">
    <property type="entry name" value="Euk_PheOH_cat"/>
</dbReference>
<dbReference type="InterPro" id="IPR005961">
    <property type="entry name" value="Phe-4-hydroxylase_tetra"/>
</dbReference>
<dbReference type="InterPro" id="IPR019773">
    <property type="entry name" value="Tyrosine_3-monooxygenase-like"/>
</dbReference>
<dbReference type="NCBIfam" id="TIGR01268">
    <property type="entry name" value="Phe4hydrox_tetr"/>
    <property type="match status" value="1"/>
</dbReference>
<dbReference type="PANTHER" id="PTHR11473">
    <property type="entry name" value="AROMATIC AMINO ACID HYDROXYLASE"/>
    <property type="match status" value="1"/>
</dbReference>
<dbReference type="PANTHER" id="PTHR11473:SF24">
    <property type="entry name" value="PHENYLALANINE-4-HYDROXYLASE"/>
    <property type="match status" value="1"/>
</dbReference>
<dbReference type="Pfam" id="PF01842">
    <property type="entry name" value="ACT"/>
    <property type="match status" value="1"/>
</dbReference>
<dbReference type="Pfam" id="PF00351">
    <property type="entry name" value="Biopterin_H"/>
    <property type="match status" value="1"/>
</dbReference>
<dbReference type="PIRSF" id="PIRSF000336">
    <property type="entry name" value="TH"/>
    <property type="match status" value="1"/>
</dbReference>
<dbReference type="PRINTS" id="PR00372">
    <property type="entry name" value="FYWHYDRXLASE"/>
</dbReference>
<dbReference type="SUPFAM" id="SSF55021">
    <property type="entry name" value="ACT-like"/>
    <property type="match status" value="1"/>
</dbReference>
<dbReference type="SUPFAM" id="SSF56534">
    <property type="entry name" value="Aromatic aminoacid monoxygenases, catalytic and oligomerization domains"/>
    <property type="match status" value="1"/>
</dbReference>
<dbReference type="PROSITE" id="PS51671">
    <property type="entry name" value="ACT"/>
    <property type="match status" value="1"/>
</dbReference>
<dbReference type="PROSITE" id="PS00367">
    <property type="entry name" value="BH4_AAA_HYDROXYL_1"/>
    <property type="match status" value="1"/>
</dbReference>
<dbReference type="PROSITE" id="PS51410">
    <property type="entry name" value="BH4_AAA_HYDROXYL_2"/>
    <property type="match status" value="1"/>
</dbReference>
<gene>
    <name type="primary">PAH</name>
</gene>
<feature type="chain" id="PRO_0000205548" description="Phenylalanine-4-hydroxylase">
    <location>
        <begin position="1"/>
        <end position="452"/>
    </location>
</feature>
<feature type="domain" description="ACT" evidence="2">
    <location>
        <begin position="36"/>
        <end position="114"/>
    </location>
</feature>
<feature type="binding site" evidence="1">
    <location>
        <position position="285"/>
    </location>
    <ligand>
        <name>Fe cation</name>
        <dbReference type="ChEBI" id="CHEBI:24875"/>
    </ligand>
</feature>
<feature type="binding site" evidence="1">
    <location>
        <position position="290"/>
    </location>
    <ligand>
        <name>Fe cation</name>
        <dbReference type="ChEBI" id="CHEBI:24875"/>
    </ligand>
</feature>
<feature type="binding site" evidence="1">
    <location>
        <position position="330"/>
    </location>
    <ligand>
        <name>Fe cation</name>
        <dbReference type="ChEBI" id="CHEBI:24875"/>
    </ligand>
</feature>
<feature type="modified residue" description="Phosphoserine; by PKA" evidence="10 56">
    <location>
        <position position="16"/>
    </location>
</feature>
<feature type="sequence variant" id="VAR_000869" description="In PAH deficiency; severe; uncertain significance; dbSNP:rs62642946." evidence="33">
    <original>S</original>
    <variation>P</variation>
    <location>
        <position position="16"/>
    </location>
</feature>
<feature type="sequence variant" id="VAR_009239" description="In PAH deficiency; mild; uncertain significance; dbSNP:rs199475662." evidence="4">
    <original>Q</original>
    <variation>L</variation>
    <location>
        <position position="20"/>
    </location>
</feature>
<feature type="sequence variant" id="VAR_000870" description="In PAH deficiency; dbSNP:rs62642926." evidence="4 7 11">
    <original>F</original>
    <variation>L</variation>
    <location>
        <position position="39"/>
    </location>
</feature>
<feature type="sequence variant" id="VAR_000871" description="In PAH deficiency; severe." evidence="29 46">
    <location>
        <position position="39"/>
    </location>
</feature>
<feature type="sequence variant" id="VAR_000872" description="In PAH deficiency; severe; dbSNP:rs62642938." evidence="41">
    <original>S</original>
    <variation>L</variation>
    <location>
        <position position="40"/>
    </location>
</feature>
<feature type="sequence variant" id="VAR_000873" description="In PAH deficiency; severe; dbSNP:rs62642928." evidence="49">
    <original>L</original>
    <variation>F</variation>
    <location>
        <position position="41"/>
    </location>
</feature>
<feature type="sequence variant" id="VAR_009240" description="In PAH deficiency; mild; uncertain significance; dbSNP:rs62642916." evidence="4">
    <original>L</original>
    <variation>P</variation>
    <location>
        <position position="41"/>
    </location>
</feature>
<feature type="sequence variant" id="VAR_000874" description="In PAH deficiency; severe; dbSNP:rs62635346." evidence="33">
    <original>K</original>
    <variation>I</variation>
    <location>
        <position position="42"/>
    </location>
</feature>
<feature type="sequence variant" id="VAR_067994" description="In PAH deficiency; severe; uncertain significance; dbSNP:rs1592988883." evidence="27">
    <original>V</original>
    <variation>A</variation>
    <location>
        <position position="45"/>
    </location>
</feature>
<feature type="sequence variant" id="VAR_000875" description="In PAH deficiency; severe; significantly reduces phenylalanine binding; dbSNP:rs74603784." evidence="41">
    <original>G</original>
    <variation>S</variation>
    <location>
        <position position="46"/>
    </location>
</feature>
<feature type="sequence variant" id="VAR_000876" description="In PAH deficiency; significantly reduces phenylalanine binding; dbSNP:rs118203925." evidence="36">
    <original>A</original>
    <variation>V</variation>
    <location>
        <position position="47"/>
    </location>
</feature>
<feature type="sequence variant" id="VAR_000877" description="In PAH deficiency; mild; dbSNP:rs5030841." evidence="4 11 20 27 41 47">
    <original>L</original>
    <variation>S</variation>
    <location>
        <position position="48"/>
    </location>
</feature>
<feature type="sequence variant" id="VAR_000878" description="In PAH deficiency; severe; uncertain significance; dbSNP:rs118092776." evidence="45">
    <original>R</original>
    <variation>H</variation>
    <location>
        <position position="53"/>
    </location>
</feature>
<feature type="sequence variant" id="VAR_000879" description="In PAH deficiency; does not affect oligomerization; results in loss of substrate activation; dbSNP:rs199475598." evidence="4 11 23 47">
    <original>F</original>
    <variation>L</variation>
    <location>
        <position position="55"/>
    </location>
</feature>
<feature type="sequence variant" id="VAR_000880" description="In PAH deficiency; severe; dbSNP:rs199475567." evidence="12">
    <original>E</original>
    <variation>D</variation>
    <location>
        <position position="56"/>
    </location>
</feature>
<feature type="sequence variant" id="VAR_067995" description="In PAH deficiency; severe; dbSNP:rs199475651." evidence="11">
    <original>N</original>
    <variation>D</variation>
    <location>
        <position position="61"/>
    </location>
</feature>
<feature type="sequence variant" id="VAR_067996" description="In PAH deficiency; severe; dbSNP:rs1877437661." evidence="27">
    <original>L</original>
    <variation>P</variation>
    <location>
        <position position="62"/>
    </location>
</feature>
<feature type="sequence variant" id="VAR_000881" description="In PAH deficiency; severe; abolishes phenylalanine binding." evidence="41 49">
    <original>TH</original>
    <variation>PN</variation>
    <location>
        <begin position="63"/>
        <end position="64"/>
    </location>
</feature>
<feature type="sequence variant" id="VAR_000882" description="In PAH deficiency; severe; dbSNP:rs75193786." evidence="47">
    <original>I</original>
    <variation>N</variation>
    <location>
        <position position="65"/>
    </location>
</feature>
<feature type="sequence variant" id="VAR_067997" description="In PAH deficiency; severe; results in disturbed oligomerization; results in loss of substrate activation; dbSNP:rs75193786." evidence="11 23">
    <original>I</original>
    <variation>S</variation>
    <location>
        <position position="65"/>
    </location>
</feature>
<feature type="sequence variant" id="VAR_000883" description="In PAH deficiency; severe; abolishes phenylalanine binding; dbSNP:rs75193786." evidence="4 11 41 46">
    <original>I</original>
    <variation>T</variation>
    <location>
        <position position="65"/>
    </location>
</feature>
<feature type="sequence variant" id="VAR_067998" description="In PAH deficiency; dbSNP:rs199475643." evidence="11 29">
    <original>I</original>
    <variation>V</variation>
    <location>
        <position position="65"/>
    </location>
</feature>
<feature type="sequence variant" id="VAR_000884" description="In PAH deficiency; severe; dbSNP:rs5030842." evidence="49">
    <original>S</original>
    <variation>P</variation>
    <location>
        <position position="67"/>
    </location>
</feature>
<feature type="sequence variant" id="VAR_000885" description="In PAH deficiency; severe; dbSNP:rs76394784." evidence="4 41">
    <original>R</original>
    <variation>S</variation>
    <location>
        <position position="68"/>
    </location>
</feature>
<feature type="sequence variant" id="VAR_000886" description="In PAH deficiency; severe; dbSNP:rs62507347." evidence="33">
    <original>E</original>
    <variation>A</variation>
    <location>
        <position position="76"/>
    </location>
</feature>
<feature type="sequence variant" id="VAR_067999" description="In PAH deficiency; dbSNP:rs62507347." evidence="9">
    <original>E</original>
    <variation>G</variation>
    <location>
        <position position="76"/>
    </location>
</feature>
<feature type="sequence variant" id="VAR_000887" description="In PAH deficiency; severe; dbSNP:rs62514902." evidence="4">
    <original>D</original>
    <variation>Y</variation>
    <location>
        <position position="84"/>
    </location>
</feature>
<feature type="sequence variant" id="VAR_000888" description="In PAH deficiency; dbSNP:rs62516151." evidence="36">
    <original>S</original>
    <variation>R</variation>
    <location>
        <position position="87"/>
    </location>
</feature>
<feature type="sequence variant" id="VAR_000889" description="In PAH deficiency; severe; dbSNP:rs62514903." evidence="49">
    <original>T</original>
    <variation>I</variation>
    <location>
        <position position="92"/>
    </location>
</feature>
<feature type="sequence variant" id="VAR_000890" description="In PAH deficiency; mild." evidence="21">
    <location>
        <position position="94"/>
    </location>
</feature>
<feature type="sequence variant" id="VAR_000891" description="In PAH deficiency; dbSNP:rs62517167." evidence="38">
    <original>L</original>
    <variation>S</variation>
    <location>
        <position position="98"/>
    </location>
</feature>
<feature type="sequence variant" id="VAR_000892" description="In PAH deficiency; mild; dbSNP:rs62642929." evidence="4 52">
    <original>A</original>
    <variation>D</variation>
    <location>
        <position position="104"/>
    </location>
</feature>
<feature type="sequence variant" id="VAR_009241" description="In PAH deficiency; mild." evidence="4">
    <original>S</original>
    <variation>C</variation>
    <location>
        <position position="110"/>
    </location>
</feature>
<feature type="sequence variant" id="VAR_069776" description="In PAH deficiency; mild." evidence="29">
    <original>F</original>
    <variation>L</variation>
    <location>
        <position position="121"/>
    </location>
</feature>
<feature type="sequence variant" id="VAR_000893" description="In PAH deficiency; severe; dbSNP:rs199475571." evidence="33">
    <original>T</original>
    <variation>I</variation>
    <location>
        <position position="124"/>
    </location>
</feature>
<feature type="sequence variant" id="VAR_000894" description="In PAH deficiency; severe; dbSNP:rs199475606." evidence="33">
    <original>D</original>
    <variation>Y</variation>
    <location>
        <position position="129"/>
    </location>
</feature>
<feature type="sequence variant" id="VAR_000895" description="In PAH deficiency; severe; dbSNP:rs199475572." evidence="40">
    <original>D</original>
    <variation>G</variation>
    <location>
        <position position="143"/>
    </location>
</feature>
<feature type="sequence variant" id="VAR_011566" description="In PAH deficiency; severe; dbSNP:rs140175796." evidence="5 7">
    <original>D</original>
    <variation>V</variation>
    <location>
        <position position="145"/>
    </location>
</feature>
<feature type="sequence variant" id="VAR_000896" description="In PAH deficiency; severe; dbSNP:rs199475599." evidence="33">
    <original>H</original>
    <variation>Y</variation>
    <location>
        <position position="146"/>
    </location>
</feature>
<feature type="sequence variant" id="VAR_000897" description="In PAH deficiency; severe; dbSNP:rs80297647." evidence="33">
    <original>G</original>
    <variation>S</variation>
    <location>
        <position position="148"/>
    </location>
</feature>
<feature type="sequence variant" id="VAR_000898" description="In PAH deficiency; severe; dbSNP:rs199475597." evidence="33">
    <original>D</original>
    <variation>H</variation>
    <location>
        <position position="151"/>
    </location>
</feature>
<feature type="sequence variant" id="VAR_000899" description="In PAH deficiency; severe; uncertain significance; dbSNP:rs199475587." evidence="33">
    <original>Y</original>
    <variation>N</variation>
    <location>
        <position position="154"/>
    </location>
</feature>
<feature type="sequence variant" id="VAR_009242" description="In PAH deficiency; severe; dbSNP:rs199475663." evidence="4">
    <original>R</original>
    <variation>P</variation>
    <location>
        <position position="155"/>
    </location>
</feature>
<feature type="sequence variant" id="VAR_000900" description="In PAH deficiency; severe; 5% activity; requires 2 nucleotide substitutions; dbSNP:rs1565853495." evidence="52">
    <original>R</original>
    <variation>N</variation>
    <location>
        <position position="157"/>
    </location>
</feature>
<feature type="sequence variant" id="VAR_068000" description="In PAH deficiency; severe; dbSNP:rs199475612." evidence="27">
    <original>R</original>
    <variation>S</variation>
    <location>
        <position position="157"/>
    </location>
</feature>
<feature type="sequence variant" id="VAR_000901" description="In PAH deficiency; severe; dbSNP:rs5030843." evidence="4 11 27 43 46">
    <original>R</original>
    <variation>Q</variation>
    <location>
        <position position="158"/>
    </location>
</feature>
<feature type="sequence variant" id="VAR_000902" description="In PAH deficiency; severe; dbSNP:rs75166491." evidence="43">
    <original>R</original>
    <variation>W</variation>
    <location>
        <position position="158"/>
    </location>
</feature>
<feature type="sequence variant" id="VAR_000903" description="In PAH deficiency; severe; dbSNP:rs199475601." evidence="33">
    <original>Q</original>
    <variation>P</variation>
    <location>
        <position position="160"/>
    </location>
</feature>
<feature type="sequence variant" id="VAR_000904" description="In PAH deficiency; severe; dbSNP:rs79635844." evidence="12">
    <original>F</original>
    <variation>S</variation>
    <location>
        <position position="161"/>
    </location>
</feature>
<feature type="sequence variant" id="VAR_000905" description="In PAH deficiency; severe; dbSNP:rs199475595." evidence="34">
    <original>I</original>
    <variation>T</variation>
    <location>
        <position position="164"/>
    </location>
</feature>
<feature type="sequence variant" id="VAR_000906" description="In PAH deficiency; severe; dbSNP:rs77554925." evidence="46">
    <original>N</original>
    <variation>I</variation>
    <location>
        <position position="167"/>
    </location>
</feature>
<feature type="sequence variant" id="VAR_011567" description="In PAH deficiency; mild; uncertain significance; dbSNP:rs77554925." evidence="7">
    <original>N</original>
    <variation>S</variation>
    <location>
        <position position="167"/>
    </location>
</feature>
<feature type="sequence variant" id="VAR_011568" description="In PAH deficiency; severe; dbSNP:rs199475679." evidence="7">
    <original>R</original>
    <variation>H</variation>
    <location>
        <position position="169"/>
    </location>
</feature>
<feature type="sequence variant" id="VAR_011569" description="In PAH deficiency; mild; dbSNP:rs199475655." evidence="7">
    <original>H</original>
    <variation>D</variation>
    <location>
        <position position="170"/>
    </location>
</feature>
<feature type="sequence variant" id="VAR_068001" description="In PAH deficiency; severe; does not affect oligomerization; dbSNP:rs199475652." evidence="11 23">
    <original>H</original>
    <variation>Q</variation>
    <location>
        <position position="170"/>
    </location>
</feature>
<feature type="sequence variant" id="VAR_000907" description="In PAH deficiency; severe; dbSNP:rs199475573." evidence="33">
    <original>H</original>
    <variation>R</variation>
    <location>
        <position position="170"/>
    </location>
</feature>
<feature type="sequence variant" id="VAR_000908" description="In PAH deficiency; severe; dbSNP:rs199475596." evidence="34">
    <original>G</original>
    <variation>A</variation>
    <location>
        <position position="171"/>
    </location>
</feature>
<feature type="sequence variant" id="VAR_000909" description="In PAH deficiency; severe; dbSNP:rs199475613." evidence="33">
    <original>G</original>
    <variation>R</variation>
    <location>
        <position position="171"/>
    </location>
</feature>
<feature type="sequence variant" id="VAR_000910" description="In PAH deficiency; severe; dbSNP:rs199475574." evidence="33">
    <original>P</original>
    <variation>T</variation>
    <location>
        <position position="173"/>
    </location>
</feature>
<feature type="sequence variant" id="VAR_000911" description="In PAH deficiency; severe; dbSNP:rs138809906." evidence="49">
    <original>I</original>
    <variation>T</variation>
    <location>
        <position position="174"/>
    </location>
</feature>
<feature type="sequence variant" id="VAR_011570" description="In PAH deficiency; severe; dbSNP:rs199475632." evidence="7">
    <original>I</original>
    <variation>V</variation>
    <location>
        <position position="174"/>
    </location>
</feature>
<feature type="sequence variant" id="VAR_000912" description="In PAH deficiency; severe; uncertain significance; dbSNP:rs199475604." evidence="33">
    <original>P</original>
    <variation>A</variation>
    <location>
        <position position="175"/>
    </location>
</feature>
<feature type="sequence variant" id="VAR_000913" description="In PAH deficiency; dbSNP:rs74486803." evidence="5 36 43">
    <original>R</original>
    <variation>L</variation>
    <location>
        <position position="176"/>
    </location>
</feature>
<feature type="sequence variant" id="VAR_000914" description="In PAH deficiency; severe; dbSNP:rs74486803." evidence="43">
    <original>R</original>
    <variation>P</variation>
    <location>
        <position position="176"/>
    </location>
</feature>
<feature type="sequence variant" id="VAR_000915" description="In PAH deficiency; severe; dbSNP:rs199475602." evidence="27">
    <original>V</original>
    <variation>L</variation>
    <location>
        <position position="177"/>
    </location>
</feature>
<feature type="sequence variant" id="VAR_068002" description="In PAH deficiency; mild; dbSNP:rs199475602." evidence="11">
    <original>V</original>
    <variation>M</variation>
    <location>
        <position position="177"/>
    </location>
</feature>
<feature type="sequence variant" id="VAR_000916" description="In PAH deficiency; dbSNP:rs77958223." evidence="27 51">
    <original>E</original>
    <variation>G</variation>
    <location>
        <position position="178"/>
    </location>
</feature>
<feature type="sequence variant" id="VAR_009243" description="In PAH deficiency; severe; dbSNP:rs199475664." evidence="4">
    <original>E</original>
    <variation>Q</variation>
    <location>
        <position position="183"/>
    </location>
</feature>
<feature type="sequence variant" id="VAR_000917" description="In PAH deficiency; severe; dbSNP:rs62514919." evidence="4 27 46">
    <original>V</original>
    <variation>A</variation>
    <location>
        <position position="190"/>
    </location>
</feature>
<feature type="sequence variant" id="VAR_000918" description="In PAH deficiency; severe; dbSNP:rs5030844." evidence="49">
    <original>L</original>
    <variation>P</variation>
    <location>
        <position position="194"/>
    </location>
</feature>
<feature type="sequence variant" id="VAR_069777" description="In PAH deficiency; mild; dbSNP:rs865899394." evidence="29">
    <original>S</original>
    <variation>Y</variation>
    <location>
        <position position="196"/>
    </location>
</feature>
<feature type="sequence variant" id="VAR_000922" description="In PAH deficiency; severe; dbSNP:rs62517180." evidence="33">
    <original>H</original>
    <variation>R</variation>
    <location>
        <position position="201"/>
    </location>
</feature>
<feature type="sequence variant" id="VAR_000923" description="In PAH deficiency; dbSNP:rs62517205." evidence="29 47">
    <original>H</original>
    <variation>Y</variation>
    <location>
        <position position="201"/>
    </location>
</feature>
<feature type="sequence variant" id="VAR_000924" description="In PAH deficiency; mild; dbSNP:rs62514927." evidence="42">
    <original>Y</original>
    <variation>C</variation>
    <location>
        <position position="204"/>
    </location>
</feature>
<feature type="sequence variant" id="VAR_011571" description="In PAH deficiency; severe; dbSNP:rs62508593." evidence="5">
    <original>E</original>
    <variation>A</variation>
    <location>
        <position position="205"/>
    </location>
</feature>
<feature type="sequence variant" id="VAR_000925" description="In PAH deficiency; severe; dbSNP:rs62517170." evidence="33">
    <original>Y</original>
    <variation>D</variation>
    <location>
        <position position="206"/>
    </location>
</feature>
<feature type="sequence variant" id="VAR_000926" description="In PAH deficiency; severe; dbSNP:rs62508572." evidence="45">
    <original>N</original>
    <variation>D</variation>
    <location>
        <position position="207"/>
    </location>
</feature>
<feature type="sequence variant" id="VAR_000927" description="In PAH deficiency; severe; dbSNP:rs62508721." evidence="42">
    <original>N</original>
    <variation>S</variation>
    <location>
        <position position="207"/>
    </location>
</feature>
<feature type="sequence variant" id="VAR_000928" description="In PAH deficiency; severe; dbSNP:rs62514931." evidence="4">
    <original>P</original>
    <variation>T</variation>
    <location>
        <position position="211"/>
    </location>
</feature>
<feature type="sequence variant" id="VAR_000929" description="In PAH deficiency; severe; dbSNP:rs62517198." evidence="33">
    <original>L</original>
    <variation>P</variation>
    <location>
        <position position="212"/>
    </location>
</feature>
<feature type="sequence variant" id="VAR_000930" description="In PAH deficiency; severe; dbSNP:rs62516109." evidence="47">
    <original>L</original>
    <variation>P</variation>
    <location>
        <position position="213"/>
    </location>
</feature>
<feature type="sequence variant" id="VAR_000931" description="In PAH deficiency; severe; dbSNP:rs62508718." evidence="33">
    <original>C</original>
    <variation>G</variation>
    <location>
        <position position="217"/>
    </location>
</feature>
<feature type="sequence variant" id="VAR_000932" description="In PAH deficiency; severe; dbSNP:rs62514933." evidence="49">
    <original>G</original>
    <variation>V</variation>
    <location>
        <position position="218"/>
    </location>
</feature>
<feature type="sequence variant" id="VAR_000933" description="In PAH deficiency; severe; dbSNP:rs62514934." evidence="20">
    <original>E</original>
    <variation>G</variation>
    <location>
        <position position="221"/>
    </location>
</feature>
<feature type="sequence variant" id="VAR_000934" description="In PAH deficiency; severe; dbSNP:rs62507319." evidence="33">
    <original>D</original>
    <variation>V</variation>
    <location>
        <position position="222"/>
    </location>
</feature>
<feature type="sequence variant" id="VAR_000935" description="In PAH deficiency; severe; dbSNP:rs199475576." evidence="33">
    <original>I</original>
    <variation>M</variation>
    <location>
        <position position="224"/>
    </location>
</feature>
<feature type="sequence variant" id="VAR_000936" description="In PAH deficiency; severe; dbSNP:rs62517204." evidence="33">
    <original>P</original>
    <variation>R</variation>
    <location>
        <position position="225"/>
    </location>
</feature>
<feature type="sequence variant" id="VAR_000937" description="In PAH deficiency; severe; dbSNP:rs199475589." evidence="51">
    <original>P</original>
    <variation>T</variation>
    <location>
        <position position="225"/>
    </location>
</feature>
<feature type="sequence variant" id="VAR_068003" description="In PAH deficiency; severe; dbSNP:rs62508615." evidence="27">
    <original>Q</original>
    <variation>H</variation>
    <location>
        <position position="226"/>
    </location>
</feature>
<feature type="sequence variant" id="VAR_000938" description="In PAH deficiency; dbSNP:rs62516152." evidence="4 29 43">
    <original>V</original>
    <variation>I</variation>
    <location>
        <position position="230"/>
    </location>
</feature>
<feature type="sequence variant" id="VAR_009244" description="In PAH deficiency; severe; dbSNP:rs62508577." evidence="4">
    <original>S</original>
    <variation>F</variation>
    <location>
        <position position="231"/>
    </location>
</feature>
<feature type="sequence variant" id="VAR_000939" description="In PAH deficiency; severe; dbSNP:rs5030845." evidence="44 49">
    <original>S</original>
    <variation>P</variation>
    <location>
        <position position="231"/>
    </location>
</feature>
<feature type="sequence variant" id="VAR_000940" description="In PAH deficiency; severe; dbSNP:rs62517208." evidence="33">
    <original>F</original>
    <variation>L</variation>
    <location>
        <position position="233"/>
    </location>
</feature>
<feature type="sequence variant" id="VAR_000941" description="In PAH deficiency; severe; dbSNP:rs199475577." evidence="33">
    <original>T</original>
    <variation>P</variation>
    <location>
        <position position="238"/>
    </location>
</feature>
<feature type="sequence variant" id="VAR_000942" description="In PAH deficiency; severe; dbSNP:rs62517178." evidence="34 49">
    <original>G</original>
    <variation>S</variation>
    <location>
        <position position="239"/>
    </location>
</feature>
<feature type="sequence variant" id="VAR_011572" description="In PAH deficiency; severe; dbSNP:rs62508594." evidence="5">
    <original>F</original>
    <variation>S</variation>
    <location>
        <position position="240"/>
    </location>
</feature>
<feature type="sequence variant" id="VAR_000943" description="In PAH deficiency; dbSNP:rs76687508." evidence="5 41 43 46 53">
    <original>R</original>
    <variation>C</variation>
    <location>
        <position position="241"/>
    </location>
</feature>
<feature type="sequence variant" id="VAR_000944" description="In PAH deficiency; severe; dbSNP:rs62508730." evidence="43">
    <original>R</original>
    <variation>H</variation>
    <location>
        <position position="241"/>
    </location>
</feature>
<feature type="sequence variant" id="VAR_000945" description="In PAH deficiency; severe; dbSNP:rs62508730." evidence="7 43">
    <original>R</original>
    <variation>L</variation>
    <location>
        <position position="241"/>
    </location>
</feature>
<feature type="sequence variant" id="VAR_000946" description="In PAH deficiency; severe; dbSNP:rs199475578." evidence="33">
    <original>L</original>
    <variation>F</variation>
    <location>
        <position position="242"/>
    </location>
</feature>
<feature type="sequence variant" id="VAR_000947" description="In PAH deficiency; dbSNP:rs62508588." evidence="4 43 48 53">
    <original>R</original>
    <variation>Q</variation>
    <location>
        <position position="243"/>
    </location>
</feature>
<feature type="sequence variant" id="VAR_000948" description="In PAH deficiency; severe; dbSNP:rs118203923." evidence="16">
    <original>P</original>
    <variation>L</variation>
    <location>
        <position position="244"/>
    </location>
</feature>
<feature type="sequence variant" id="VAR_000949" description="In PAH deficiency; dbSNP:rs76212747." evidence="4 11 27 36 41">
    <original>V</original>
    <variation>A</variation>
    <location>
        <position position="245"/>
    </location>
</feature>
<feature type="sequence variant" id="VAR_000950" description="In PAH deficiency; severe; dbSNP:rs76212747." evidence="49">
    <original>V</original>
    <variation>E</variation>
    <location>
        <position position="245"/>
    </location>
</feature>
<feature type="sequence variant" id="VAR_000951" description="In PAH deficiency; severe; dbSNP:rs62508694." evidence="33">
    <original>V</original>
    <variation>L</variation>
    <location>
        <position position="245"/>
    </location>
</feature>
<feature type="sequence variant" id="VAR_000952" description="In PAH deficiency; severe; uncertain significance; dbSNP:rs199475610." evidence="33">
    <original>A</original>
    <variation>D</variation>
    <location>
        <position position="246"/>
    </location>
</feature>
<feature type="sequence variant" id="VAR_000953" description="In PAH deficiency; severe; dbSNP:rs199475579." evidence="12">
    <original>G</original>
    <variation>V</variation>
    <location>
        <position position="247"/>
    </location>
</feature>
<feature type="sequence variant" id="VAR_000954" description="In PAH deficiency; severe; uncertain significance; dbSNP:rs62507340." evidence="33">
    <original>L</original>
    <variation>P</variation>
    <location>
        <position position="248"/>
    </location>
</feature>
<feature type="sequence variant" id="VAR_000955" description="In PAH deficiency; severe; dbSNP:rs74503222." evidence="7">
    <original>L</original>
    <variation>F</variation>
    <location>
        <position position="249"/>
    </location>
</feature>
<feature type="sequence variant" id="VAR_000956" description="In PAH deficiency; severe; dbSNP:rs5030847." evidence="43 49">
    <original>R</original>
    <variation>G</variation>
    <location>
        <position position="252"/>
    </location>
</feature>
<feature type="sequence variant" id="VAR_000957" description="In PAH deficiency; severe; dbSNP:rs62644503." evidence="34 43">
    <original>R</original>
    <variation>Q</variation>
    <location>
        <position position="252"/>
    </location>
</feature>
<feature type="sequence variant" id="VAR_000958" description="In PAH deficiency; severe; complete loss of activity; dbSNP:rs5030847." evidence="4 8 19 27 29 43">
    <original>R</original>
    <variation>W</variation>
    <location>
        <position position="252"/>
    </location>
</feature>
<feature type="sequence variant" id="VAR_000960" description="In PAH deficiency; severe; dbSNP:rs62642930." evidence="26">
    <original>L</original>
    <variation>S</variation>
    <location>
        <position position="255"/>
    </location>
</feature>
<feature type="sequence variant" id="VAR_000959" description="In PAH deficiency; severe; dbSNP:rs62642931." evidence="12">
    <original>L</original>
    <variation>V</variation>
    <location>
        <position position="255"/>
    </location>
</feature>
<feature type="sequence variant" id="VAR_000961" description="In PAH deficiency; severe; dbSNP:rs5030848." evidence="33">
    <original>G</original>
    <variation>C</variation>
    <location>
        <position position="257"/>
    </location>
</feature>
<feature type="sequence variant" id="VAR_000962" description="In PAH deficiency; severe; dbSNP:rs62642932." evidence="44">
    <original>A</original>
    <variation>T</variation>
    <location>
        <position position="259"/>
    </location>
</feature>
<feature type="sequence variant" id="VAR_000963" description="In PAH deficiency; severe; dbSNP:rs118203921." evidence="12 49">
    <original>A</original>
    <variation>V</variation>
    <location>
        <position position="259"/>
    </location>
</feature>
<feature type="sequence variant" id="VAR_000964" description="In PAH deficiency; severe; dbSNP:rs5030849." evidence="43">
    <original>R</original>
    <variation>P</variation>
    <location>
        <position position="261"/>
    </location>
</feature>
<feature type="sequence variant" id="VAR_000965" description="In PAH deficiency; dbSNP:rs5030849." evidence="4 11 17 27 29 41 43">
    <original>R</original>
    <variation>Q</variation>
    <location>
        <position position="261"/>
    </location>
</feature>
<feature type="sequence variant" id="VAR_000966" description="In PAH deficiency; severe; uncertain significance; dbSNP:rs62642944." evidence="33">
    <original>F</original>
    <variation>L</variation>
    <location>
        <position position="263"/>
    </location>
</feature>
<feature type="sequence variant" id="VAR_000967" description="In PAH deficiency; severe; uncertain significance; dbSNP:rs199475580." evidence="33">
    <original>H</original>
    <variation>L</variation>
    <location>
        <position position="264"/>
    </location>
</feature>
<feature type="sequence variant" id="VAR_000968" description="In PAH deficiency; severe; uncertain significance; dbSNP:rs62517181." evidence="33">
    <original>C</original>
    <variation>G</variation>
    <location>
        <position position="265"/>
    </location>
</feature>
<feature type="sequence variant" id="VAR_000969" description="In PAH deficiency; dbSNP:rs62508692." evidence="47">
    <original>I</original>
    <variation>L</variation>
    <location>
        <position position="269"/>
    </location>
</feature>
<feature type="sequence variant" id="VAR_000970" description="In PAH deficiency; severe; dbSNP:rs62514950." evidence="5">
    <original>R</original>
    <variation>K</variation>
    <location>
        <position position="270"/>
    </location>
</feature>
<feature type="sequence variant" id="VAR_000971" description="In PAH deficiency; severe; dbSNP:rs62514951." evidence="33">
    <original>R</original>
    <variation>S</variation>
    <location>
        <position position="270"/>
    </location>
</feature>
<feature type="sequence variant" id="VAR_000972" description="In PAH deficiency; severe; uncertain significance; dbSNP:rs62517164." evidence="33">
    <original>H</original>
    <variation>Y</variation>
    <location>
        <position position="271"/>
    </location>
</feature>
<feature type="sequence variant" id="VAR_000973" description="In PAH deficiency; severe; dbSNP:rs62514953." evidence="12">
    <original>S</original>
    <variation>F</variation>
    <location>
        <position position="273"/>
    </location>
</feature>
<feature type="sequence variant" id="VAR_011573" description="In PAH deficiency; severe; likely benign; dbSNP:rs142934616." evidence="5 8">
    <original>K</original>
    <variation>E</variation>
    <location>
        <position position="274"/>
    </location>
</feature>
<feature type="sequence variant" id="VAR_068004" description="In PAH deficiency; severe; reduced activity; increased affinity for the substrate; mildly reduced substrate activation; decreased cofactor affinity; dbSNP:rs62508715." evidence="11 23">
    <original>P</original>
    <variation>L</variation>
    <location>
        <position position="275"/>
    </location>
</feature>
<feature type="sequence variant" id="VAR_000974" description="In PAH deficiency; severe; uncertain significance; dbSNP:rs62514954." evidence="12">
    <original>M</original>
    <variation>I</variation>
    <location>
        <position position="276"/>
    </location>
</feature>
<feature type="sequence variant" id="VAR_000975" description="In PAH deficiency; severe; dbSNP:rs62516149." evidence="35">
    <original>M</original>
    <variation>V</variation>
    <location>
        <position position="276"/>
    </location>
</feature>
<feature type="sequence variant" id="VAR_000976" description="In PAH deficiency; severe; dbSNP:rs62516155." evidence="33">
    <original>Y</original>
    <variation>C</variation>
    <location>
        <position position="277"/>
    </location>
</feature>
<feature type="sequence variant" id="VAR_000977" description="In PAH deficiency; severe; dbSNP:rs78655458." evidence="12">
    <original>Y</original>
    <variation>D</variation>
    <location>
        <position position="277"/>
    </location>
</feature>
<feature type="sequence variant" id="VAR_000978" description="In PAH deficiency; severe; dbSNP:rs62516156." evidence="33">
    <original>T</original>
    <variation>A</variation>
    <location>
        <position position="278"/>
    </location>
</feature>
<feature type="sequence variant" id="VAR_000979" description="In PAH deficiency; severe; dbSNP:rs62507262." evidence="33">
    <original>T</original>
    <variation>N</variation>
    <location>
        <position position="278"/>
    </location>
</feature>
<feature type="sequence variant" id="VAR_000980" description="In PAH deficiency; severe; partial residual activity; dbSNP:rs62508698." evidence="27 30 41 43">
    <original>E</original>
    <variation>K</variation>
    <location>
        <position position="280"/>
    </location>
</feature>
<feature type="sequence variant" id="VAR_000981" description="In PAH deficiency; severe; dbSNP:rs5030851." evidence="4 11 18 19 27 41 43">
    <original>P</original>
    <variation>L</variation>
    <location>
        <position position="281"/>
    </location>
</feature>
<feature type="sequence variant" id="VAR_000982" description="In PAH deficiency; severe; dbSNP:rs199475582." evidence="49">
    <original>D</original>
    <variation>N</variation>
    <location>
        <position position="282"/>
    </location>
</feature>
<feature type="sequence variant" id="VAR_000983" description="In PAH deficiency; severe; dbSNP:rs62517168." evidence="49">
    <original>I</original>
    <variation>F</variation>
    <location>
        <position position="283"/>
    </location>
</feature>
<feature type="sequence variant" id="VAR_000984" description="In PAH deficiency; severe; dbSNP:rs62508693." evidence="47">
    <original>I</original>
    <variation>N</variation>
    <location>
        <position position="283"/>
    </location>
</feature>
<feature type="sequence variant" id="VAR_067758" description="In PAH deficiency; severe; dbSNP:rs1486763160." evidence="28">
    <original>H</original>
    <variation>Y</variation>
    <location>
        <position position="290"/>
    </location>
</feature>
<feature type="sequence variant" id="VAR_000985" description="In PAH deficiency; severe; dbSNP:rs62642945." evidence="43">
    <original>R</original>
    <variation>C</variation>
    <location>
        <position position="297"/>
    </location>
</feature>
<feature type="sequence variant" id="VAR_000986" description="In PAH deficiency; severe; dbSNP:rs62642939." evidence="43">
    <original>R</original>
    <variation>H</variation>
    <location>
        <position position="297"/>
    </location>
</feature>
<feature type="sequence variant" id="VAR_000987" description="In PAH deficiency; severe; dbSNP:rs62642933." evidence="4 7 41">
    <original>F</original>
    <variation>C</variation>
    <location>
        <position position="299"/>
    </location>
</feature>
<feature type="sequence variant" id="VAR_000988" description="In PAH deficiency; does not affect oligomerization; reduction in activity is probably due to a global conformational change in the protein that reduces allostery; dbSNP:rs5030853." evidence="4 5 11 23 27 29">
    <original>A</original>
    <variation>S</variation>
    <location>
        <position position="300"/>
    </location>
</feature>
<feature type="sequence variant" id="VAR_000989" description="In PAH deficiency; severe; dbSNP:rs199475609." evidence="33">
    <original>A</original>
    <variation>V</variation>
    <location>
        <position position="300"/>
    </location>
</feature>
<feature type="sequence variant" id="VAR_000990" description="In PAH deficiency; severe; dbSNP:rs199475608." evidence="49">
    <original>S</original>
    <variation>P</variation>
    <location>
        <position position="303"/>
    </location>
</feature>
<feature type="sequence variant" id="VAR_000991" description="In PAH deficiency; severe; dbSNP:rs199475592." evidence="33">
    <original>Q</original>
    <variation>R</variation>
    <location>
        <position position="304"/>
    </location>
</feature>
<feature type="sequence variant" id="VAR_000992" description="In PAH deficiency; dbSNP:rs62642934." evidence="4 14 29">
    <original>I</original>
    <variation>V</variation>
    <location>
        <position position="306"/>
    </location>
</feature>
<feature type="sequence variant" id="VAR_000993" description="In PAH deficiency; severe; dbSNP:rs62642935." evidence="33">
    <original>A</original>
    <variation>D</variation>
    <location>
        <position position="309"/>
    </location>
</feature>
<feature type="sequence variant" id="VAR_000994" description="In PAH deficiency; severe; dbSNP:rs62642935." evidence="4">
    <original>A</original>
    <variation>V</variation>
    <location>
        <position position="309"/>
    </location>
</feature>
<feature type="sequence variant" id="VAR_000995" description="In PAH deficiency; severe; dbSNP:rs62642913." evidence="33">
    <original>S</original>
    <variation>F</variation>
    <location>
        <position position="310"/>
    </location>
</feature>
<feature type="sequence variant" id="VAR_068005" description="In PAH deficiency; mild; reduction in activity is probably due to a global conformational change in the protein that reduces allostery; dbSNP:rs62642913." evidence="11 23">
    <original>S</original>
    <variation>Y</variation>
    <location>
        <position position="310"/>
    </location>
</feature>
<feature type="sequence variant" id="VAR_000996" description="In PAH deficiency; severe; dbSNP:rs62642936." evidence="5 31 32">
    <original>L</original>
    <variation>P</variation>
    <location>
        <position position="311"/>
    </location>
</feature>
<feature type="sequence variant" id="VAR_000997" description="In PAH deficiency; severe; dbSNP:rs62642940." evidence="49">
    <original>P</original>
    <variation>H</variation>
    <location>
        <position position="314"/>
    </location>
</feature>
<feature type="sequence variant" id="VAR_068006" description="In PAH deficiency; mild; does not affect oligomerization; reduction in activity is probably due to a global conformational change in the protein that reduces allostery; dbSNP:rs199475650." evidence="11 23">
    <original>P</original>
    <variation>S</variation>
    <location>
        <position position="314"/>
    </location>
</feature>
<feature type="sequence variant" id="VAR_011574" description="In PAH deficiency; severe; partial loss of activity; dbSNP:rs62642918." evidence="5 8">
    <original>I</original>
    <variation>T</variation>
    <location>
        <position position="318"/>
    </location>
</feature>
<feature type="sequence variant" id="VAR_000998" description="In PAH deficiency; severe; dbSNP:rs62514958." evidence="12">
    <original>A</original>
    <variation>G</variation>
    <location>
        <position position="322"/>
    </location>
</feature>
<feature type="sequence variant" id="VAR_000999" description="In PAH deficiency; severe; dbSNP:rs62514957." evidence="12 43">
    <original>A</original>
    <variation>T</variation>
    <location>
        <position position="322"/>
    </location>
</feature>
<feature type="sequence variant" id="VAR_067759" description="In PAH deficiency; severe; dbSNP:rs62514958." evidence="28">
    <original>A</original>
    <variation>V</variation>
    <location>
        <position position="322"/>
    </location>
</feature>
<feature type="sequence variant" id="VAR_009245" description="In PAH deficiency; severe; dbSNP:rs62508578." evidence="4">
    <original>Y</original>
    <variation>C</variation>
    <location>
        <position position="325"/>
    </location>
</feature>
<feature type="sequence variant" id="VAR_009246" description="In PAH deficiency; severe; dbSNP:rs62508580." evidence="4">
    <original>E</original>
    <variation>D</variation>
    <location>
        <position position="330"/>
    </location>
</feature>
<feature type="sequence variant" id="VAR_001000" description="In PAH deficiency; severe; dbSNP:rs62517179." evidence="34 49">
    <original>F</original>
    <variation>L</variation>
    <location>
        <position position="331"/>
    </location>
</feature>
<feature type="sequence variant" id="VAR_001001" description="In PAH deficiency; severe; dbSNP:rs62516060." evidence="49">
    <original>L</original>
    <variation>F</variation>
    <location>
        <position position="333"/>
    </location>
</feature>
<feature type="sequence variant" id="VAR_001002" description="In PAH deficiency; severe; uncertain significance; dbSNP:rs62517174." evidence="33">
    <original>C</original>
    <variation>S</variation>
    <location>
        <position position="334"/>
    </location>
</feature>
<feature type="sequence variant" id="VAR_001003" description="In PAH deficiency; severe; uncertain significance; dbSNP:rs62517206." evidence="33">
    <original>G</original>
    <variation>V</variation>
    <location>
        <position position="337"/>
    </location>
</feature>
<feature type="sequence variant" id="VAR_001004" description="In PAH deficiency; severe; dbSNP:rs62516150." evidence="33">
    <original>D</original>
    <variation>Y</variation>
    <location>
        <position position="338"/>
    </location>
</feature>
<feature type="sequence variant" id="VAR_001005" description="In PAH deficiency; severe; dbSNP:rs62516153." evidence="33">
    <original>K</original>
    <variation>R</variation>
    <location>
        <position position="341"/>
    </location>
</feature>
<feature type="sequence variant" id="VAR_001006" description="In PAH deficiency; severe; dbSNP:rs62516153." evidence="33">
    <original>K</original>
    <variation>T</variation>
    <location>
        <position position="341"/>
    </location>
</feature>
<feature type="sequence variant" id="VAR_001007" description="In PAH deficiency; severe; dbSNP:rs62507282." evidence="49">
    <original>A</original>
    <variation>T</variation>
    <location>
        <position position="342"/>
    </location>
</feature>
<feature type="sequence variant" id="VAR_001008" description="In PAH deficiency; severe; dbSNP:rs62507265." evidence="33">
    <original>Y</original>
    <variation>C</variation>
    <location>
        <position position="343"/>
    </location>
</feature>
<feature type="sequence variant" id="VAR_009247" description="In PAH deficiency; severe; uncertain significance; dbSNP:rs62508679." evidence="4">
    <original>G</original>
    <variation>R</variation>
    <location>
        <position position="344"/>
    </location>
</feature>
<feature type="sequence variant" id="VAR_009248" description="In PAH deficiency; severe; uncertain significance; dbSNP:rs62508582." evidence="4">
    <original>G</original>
    <variation>V</variation>
    <location>
        <position position="344"/>
    </location>
</feature>
<feature type="sequence variant" id="VAR_001009" description="In PAH deficiency; severe; dbSNP:rs62516062." evidence="33">
    <original>A</original>
    <variation>S</variation>
    <location>
        <position position="345"/>
    </location>
</feature>
<feature type="sequence variant" id="VAR_001010" description="In PAH deficiency; severe; dbSNP:rs62516062." evidence="12">
    <original>A</original>
    <variation>T</variation>
    <location>
        <position position="345"/>
    </location>
</feature>
<feature type="sequence variant" id="VAR_001011" description="In PAH deficiency; severe; uncertain significance; dbSNP:rs62516154." evidence="33">
    <original>L</original>
    <variation>F</variation>
    <location>
        <position position="347"/>
    </location>
</feature>
<feature type="sequence variant" id="VAR_001012" description="In PAH deficiency; mild; dbSNP:rs62516092." evidence="4 5 12">
    <original>L</original>
    <variation>V</variation>
    <location>
        <position position="348"/>
    </location>
</feature>
<feature type="sequence variant" id="VAR_001013" description="In PAH deficiency; severe; dbSNP:rs62507279." evidence="48">
    <original>S</original>
    <variation>L</variation>
    <location>
        <position position="349"/>
    </location>
</feature>
<feature type="sequence variant" id="VAR_001014" description="In PAH deficiency; severe; dbSNP:rs62508646." evidence="4 27">
    <original>S</original>
    <variation>P</variation>
    <location>
        <position position="349"/>
    </location>
</feature>
<feature type="sequence variant" id="VAR_001015" description="In PAH deficiency; severe; dbSNP:rs62517183." evidence="49">
    <original>S</original>
    <variation>T</variation>
    <location>
        <position position="350"/>
    </location>
</feature>
<feature type="sequence variant" id="VAR_011575" description="In PAH deficiency; severe; dbSNP:rs62508595." evidence="5">
    <original>C</original>
    <variation>G</variation>
    <location>
        <position position="357"/>
    </location>
</feature>
<feature type="sequence variant" id="VAR_001016" description="In PAH deficiency; severe; dbSNP:rs62507329." evidence="3">
    <original>P</original>
    <variation>T</variation>
    <location>
        <position position="362"/>
    </location>
</feature>
<feature type="sequence variant" id="VAR_001018" description="In PAH deficiency; severe; dbSNP:rs62516096." evidence="15">
    <location>
        <begin position="364"/>
        <end position="368"/>
    </location>
</feature>
<feature type="sequence variant" id="VAR_001017" description="In PAH deficiency; severe; dbSNP:rs62516096." evidence="25">
    <location>
        <position position="364"/>
    </location>
</feature>
<feature type="sequence variant" id="VAR_001019" description="In PAH deficiency; severe; dbSNP:rs62516098." evidence="49">
    <original>P</original>
    <variation>H</variation>
    <location>
        <position position="366"/>
    </location>
</feature>
<feature type="sequence variant" id="VAR_001020" description="In PAH deficiency; severe; dbSNP:rs62517163." evidence="33">
    <original>T</original>
    <variation>S</variation>
    <location>
        <position position="372"/>
    </location>
</feature>
<feature type="sequence variant" id="VAR_001021" description="In PAH deficiency; severe; dbSNP:rs62642942." evidence="33">
    <original>Y</original>
    <variation>C</variation>
    <location>
        <position position="377"/>
    </location>
</feature>
<feature type="sequence variant" id="VAR_001022" description="In PAH deficiency; dbSNP:rs62642937." evidence="29 43">
    <original>T</original>
    <variation>M</variation>
    <location>
        <position position="380"/>
    </location>
</feature>
<feature type="sequence variant" id="VAR_001023" description="In PAH deficiency; severe; dbSNP:rs62516141." evidence="4 7">
    <original>Y</original>
    <variation>C</variation>
    <location>
        <position position="386"/>
    </location>
</feature>
<feature type="sequence variant" id="VAR_001024" description="In PAH deficiency; severe; dbSNP:rs62517194." evidence="33">
    <original>Y</original>
    <variation>H</variation>
    <location>
        <position position="387"/>
    </location>
</feature>
<feature type="sequence variant" id="VAR_001025" description="In PAH deficiency; severe; dbSNP:rs62516101." evidence="43 45">
    <original>V</original>
    <variation>L</variation>
    <location>
        <position position="388"/>
    </location>
</feature>
<feature type="sequence variant" id="VAR_001026" description="In PAH deficiency; severe; dbSNP:rs62516101." evidence="7 43">
    <original>V</original>
    <variation>M</variation>
    <location>
        <position position="388"/>
    </location>
</feature>
<feature type="sequence variant" id="VAR_001027" description="In PAH deficiency; dbSNP:rs5030856." evidence="4 5 11 27 29 37 41">
    <original>E</original>
    <variation>G</variation>
    <location>
        <position position="390"/>
    </location>
</feature>
<feature type="sequence variant" id="VAR_001028" description="In PAH deficiency; severe; dbSNP:rs62516102." evidence="49">
    <original>D</original>
    <variation>A</variation>
    <location>
        <position position="394"/>
    </location>
</feature>
<feature type="sequence variant" id="VAR_001029" description="In PAH deficiency; severe; dbSNP:rs62516142." evidence="41">
    <original>D</original>
    <variation>H</variation>
    <location>
        <position position="394"/>
    </location>
</feature>
<feature type="sequence variant" id="VAR_001030" description="In PAH deficiency; severe; dbSNP:rs62508736." evidence="49">
    <original>A</original>
    <variation>G</variation>
    <location>
        <position position="395"/>
    </location>
</feature>
<feature type="sequence variant" id="VAR_001031" description="In PAH deficiency; severe; dbSNP:rs62516103." evidence="4 49">
    <original>A</original>
    <variation>P</variation>
    <location>
        <position position="395"/>
    </location>
</feature>
<feature type="sequence variant" id="VAR_001033" description="In PAH deficiency; dbSNP:rs5030857." evidence="4 7 11 27 29 41">
    <original>A</original>
    <variation>V</variation>
    <location>
        <position position="403"/>
    </location>
</feature>
<feature type="sequence variant" id="VAR_068007" description="In PAH deficiency; severe; dbSNP:rs62644473." evidence="54">
    <original>P</original>
    <variation>L</variation>
    <location>
        <position position="407"/>
    </location>
</feature>
<feature type="sequence variant" id="VAR_011576" description="In PAH deficiency; severe; dbSNP:rs62644465." evidence="7">
    <original>P</original>
    <variation>S</variation>
    <location>
        <position position="407"/>
    </location>
</feature>
<feature type="sequence variant" id="VAR_001034" description="In PAH deficiency; severe; dbSNP:rs5030859." evidence="13 43">
    <original>R</original>
    <variation>Q</variation>
    <location>
        <position position="408"/>
    </location>
</feature>
<feature type="sequence variant" id="VAR_001035" description="In PAH deficiency; most common mutation; reduction in activity is probably due to a global conformational change in the protein that reduces allostery; dbSNP:rs5030858." evidence="4 11 13 23 27 29 41 43 46 48">
    <original>R</original>
    <variation>W</variation>
    <location>
        <position position="408"/>
    </location>
</feature>
<feature type="sequence variant" id="VAR_009249" description="In PAH deficiency; mild; dbSNP:rs62644475." evidence="4">
    <original>F</original>
    <variation>S</variation>
    <location>
        <position position="410"/>
    </location>
</feature>
<feature type="sequence variant" id="VAR_001036" description="In PAH deficiency; dbSNP:rs79931499." evidence="11 43 53">
    <original>R</original>
    <variation>P</variation>
    <location>
        <position position="413"/>
    </location>
</feature>
<feature type="sequence variant" id="VAR_001037" description="In PAH deficiency; severe; dbSNP:rs62644467." evidence="43">
    <original>R</original>
    <variation>S</variation>
    <location>
        <position position="413"/>
    </location>
</feature>
<feature type="sequence variant" id="VAR_001038" description="In PAH deficiency; does not affect oligomerization; reduction in activity is probably due to a global conformational change in the protein that reduces allostery; dbSNP:rs5030860." evidence="4 7 11 23 41">
    <original>Y</original>
    <variation>C</variation>
    <location>
        <position position="414"/>
    </location>
</feature>
<feature type="sequence variant" id="VAR_001039" description="In PAH deficiency; dbSNP:rs62644499." evidence="11 14 27 43">
    <original>D</original>
    <variation>N</variation>
    <location>
        <position position="415"/>
    </location>
</feature>
<feature type="sequence variant" id="VAR_068008" description="In PAH deficiency; severe; reduction in activity is probably due to a global conformational change in the protein that reduces allostery; dbSNP:rs62644471." evidence="11 23">
    <original>Y</original>
    <variation>H</variation>
    <location>
        <position position="417"/>
    </location>
</feature>
<feature type="sequence variant" id="VAR_001040" description="In PAH deficiency; severe; dbSNP:rs62644501." evidence="12">
    <original>T</original>
    <variation>P</variation>
    <location>
        <position position="418"/>
    </location>
</feature>
<feature type="sequence variant" id="VAR_067760" description="In PAH deficiency; severe; dbSNP:rs199475696." evidence="28">
    <original>I</original>
    <variation>S</variation>
    <location>
        <position position="421"/>
    </location>
</feature>
<feature type="sequence variant" id="VAR_001041" description="In PAH deficiency; severe; dbSNP:rs199475607." evidence="33">
    <original>L</original>
    <variation>P</variation>
    <location>
        <position position="430"/>
    </location>
</feature>
<feature type="sequence variant" id="VAR_001042" description="In PAH deficiency; severe; dbSNP:rs76542238." evidence="33">
    <original>A</original>
    <variation>D</variation>
    <location>
        <position position="447"/>
    </location>
</feature>
<feature type="mutagenesis site" description="Loss of positive cooperativity and reduction of fold-activation by L-Phe preincubation." evidence="24">
    <original>I</original>
    <variation>C</variation>
    <location>
        <position position="283"/>
    </location>
</feature>
<feature type="sequence conflict" description="In Ref. 3; AAH26251." evidence="55" ref="3">
    <original>E</original>
    <variation>G</variation>
    <location>
        <position position="183"/>
    </location>
</feature>
<feature type="strand" evidence="60">
    <location>
        <begin position="35"/>
        <end position="42"/>
    </location>
</feature>
<feature type="helix" evidence="60">
    <location>
        <begin position="47"/>
        <end position="57"/>
    </location>
</feature>
<feature type="strand" evidence="60">
    <location>
        <begin position="62"/>
        <end position="69"/>
    </location>
</feature>
<feature type="strand" evidence="61">
    <location>
        <begin position="71"/>
        <end position="73"/>
    </location>
</feature>
<feature type="strand" evidence="60">
    <location>
        <begin position="76"/>
        <end position="83"/>
    </location>
</feature>
<feature type="helix" evidence="60">
    <location>
        <begin position="85"/>
        <end position="90"/>
    </location>
</feature>
<feature type="helix" evidence="60">
    <location>
        <begin position="91"/>
        <end position="102"/>
    </location>
</feature>
<feature type="strand" evidence="60">
    <location>
        <begin position="105"/>
        <end position="108"/>
    </location>
</feature>
<feature type="helix" evidence="57">
    <location>
        <begin position="125"/>
        <end position="133"/>
    </location>
</feature>
<feature type="strand" evidence="59">
    <location>
        <begin position="135"/>
        <end position="138"/>
    </location>
</feature>
<feature type="helix" evidence="57">
    <location>
        <begin position="140"/>
        <end position="142"/>
    </location>
</feature>
<feature type="turn" evidence="57">
    <location>
        <begin position="147"/>
        <end position="150"/>
    </location>
</feature>
<feature type="helix" evidence="57">
    <location>
        <begin position="152"/>
        <end position="167"/>
    </location>
</feature>
<feature type="strand" evidence="62">
    <location>
        <begin position="170"/>
        <end position="172"/>
    </location>
</feature>
<feature type="helix" evidence="57">
    <location>
        <begin position="181"/>
        <end position="201"/>
    </location>
</feature>
<feature type="helix" evidence="57">
    <location>
        <begin position="204"/>
        <end position="217"/>
    </location>
</feature>
<feature type="helix" evidence="57">
    <location>
        <begin position="227"/>
        <end position="238"/>
    </location>
</feature>
<feature type="strand" evidence="57">
    <location>
        <begin position="241"/>
        <end position="244"/>
    </location>
</feature>
<feature type="strand" evidence="58">
    <location>
        <begin position="246"/>
        <end position="248"/>
    </location>
</feature>
<feature type="helix" evidence="57">
    <location>
        <begin position="251"/>
        <end position="259"/>
    </location>
</feature>
<feature type="strand" evidence="57">
    <location>
        <begin position="262"/>
        <end position="265"/>
    </location>
</feature>
<feature type="helix" evidence="57">
    <location>
        <begin position="283"/>
        <end position="289"/>
    </location>
</feature>
<feature type="helix" evidence="57">
    <location>
        <begin position="291"/>
        <end position="294"/>
    </location>
</feature>
<feature type="helix" evidence="57">
    <location>
        <begin position="297"/>
        <end position="310"/>
    </location>
</feature>
<feature type="helix" evidence="57">
    <location>
        <begin position="315"/>
        <end position="327"/>
    </location>
</feature>
<feature type="turn" evidence="57">
    <location>
        <begin position="328"/>
        <end position="331"/>
    </location>
</feature>
<feature type="strand" evidence="57">
    <location>
        <begin position="333"/>
        <end position="336"/>
    </location>
</feature>
<feature type="strand" evidence="57">
    <location>
        <begin position="339"/>
        <end position="342"/>
    </location>
</feature>
<feature type="helix" evidence="57">
    <location>
        <begin position="345"/>
        <end position="348"/>
    </location>
</feature>
<feature type="helix" evidence="57">
    <location>
        <begin position="351"/>
        <end position="357"/>
    </location>
</feature>
<feature type="strand" evidence="57">
    <location>
        <begin position="359"/>
        <end position="366"/>
    </location>
</feature>
<feature type="helix" evidence="57">
    <location>
        <begin position="369"/>
        <end position="372"/>
    </location>
</feature>
<feature type="strand" evidence="57">
    <location>
        <begin position="379"/>
        <end position="381"/>
    </location>
</feature>
<feature type="strand" evidence="57">
    <location>
        <begin position="384"/>
        <end position="390"/>
    </location>
</feature>
<feature type="helix" evidence="57">
    <location>
        <begin position="392"/>
        <end position="403"/>
    </location>
</feature>
<feature type="strand" evidence="57">
    <location>
        <begin position="409"/>
        <end position="415"/>
    </location>
</feature>
<feature type="turn" evidence="57">
    <location>
        <begin position="416"/>
        <end position="419"/>
    </location>
</feature>
<feature type="strand" evidence="57">
    <location>
        <begin position="420"/>
        <end position="424"/>
    </location>
</feature>
<feature type="helix" evidence="62">
    <location>
        <begin position="428"/>
        <end position="439"/>
    </location>
</feature>
<name>PH4H_HUMAN</name>
<proteinExistence type="evidence at protein level"/>
<accession>P00439</accession>
<accession>Q16717</accession>
<accession>Q8TC14</accession>
<reference key="1">
    <citation type="journal article" date="1985" name="Biochemistry">
        <title>Nucleotide sequence of a full-length complementary DNA clone and amino acid sequence of human phenylalanine hydroxylase.</title>
        <authorList>
            <person name="Kwok S.C.M."/>
            <person name="Ledley F.D."/>
            <person name="Dilella A.G."/>
            <person name="Robson K.J.H."/>
            <person name="Woo S.L.C."/>
        </authorList>
    </citation>
    <scope>NUCLEOTIDE SEQUENCE [MRNA]</scope>
    <source>
        <tissue>Liver</tissue>
    </source>
</reference>
<reference key="2">
    <citation type="submission" date="1997-09" db="EMBL/GenBank/DDBJ databases">
        <authorList>
            <person name="Scriver C.R."/>
            <person name="Nowacki P.M."/>
            <person name="Byck S."/>
            <person name="Prevost L."/>
        </authorList>
    </citation>
    <scope>NUCLEOTIDE SEQUENCE [MRNA]</scope>
</reference>
<reference key="3">
    <citation type="journal article" date="2004" name="Genome Res.">
        <title>The status, quality, and expansion of the NIH full-length cDNA project: the Mammalian Gene Collection (MGC).</title>
        <authorList>
            <consortium name="The MGC Project Team"/>
        </authorList>
    </citation>
    <scope>NUCLEOTIDE SEQUENCE [LARGE SCALE MRNA]</scope>
    <source>
        <tissue>Liver</tissue>
    </source>
</reference>
<reference key="4">
    <citation type="journal article" date="1988" name="Biochem. J.">
        <title>A monoclonal antibody to aromatic amino acid hydroxylases. Identification of the epitope.</title>
        <authorList>
            <person name="Cotton R.G."/>
            <person name="McAdam W."/>
            <person name="Jennings I."/>
            <person name="Morgan F.J."/>
        </authorList>
    </citation>
    <scope>PROTEIN SEQUENCE OF 131-144</scope>
</reference>
<reference key="5">
    <citation type="journal article" date="2002" name="J. Biol. Chem.">
        <title>Phosphorylation and mutations of Ser(16) in human phenylalanine hydroxylase. Kinetic and structural effects.</title>
        <authorList>
            <person name="Miranda F.F."/>
            <person name="Teigen K."/>
            <person name="Thorolfsson M."/>
            <person name="Svebak R.M."/>
            <person name="Knappskog P.M."/>
            <person name="Flatmark T."/>
            <person name="Martinez A."/>
        </authorList>
    </citation>
    <scope>PHOSPHORYLATION AT SER-16</scope>
</reference>
<reference key="6">
    <citation type="journal article" date="2008" name="FASEB J.">
        <title>Anabolic function of phenylalanine hydroxylase in Caenorhabditis elegans.</title>
        <authorList>
            <person name="Calvo A.C."/>
            <person name="Pey A.L."/>
            <person name="Ying M."/>
            <person name="Loer C.M."/>
            <person name="Martinez A."/>
        </authorList>
    </citation>
    <scope>FUNCTION</scope>
    <scope>CATALYTIC ACTIVITY</scope>
    <scope>ACTIVITY REGULATION</scope>
    <scope>BIOPHYSICOCHEMICAL PROPERTIES</scope>
</reference>
<reference key="7">
    <citation type="journal article" date="2008" name="Gene">
        <title>The phylogeny of the aromatic amino acid hydroxylases revisited by characterizing phenylalanine hydroxylase from Dictyostelium discoideum.</title>
        <authorList>
            <person name="Siltberg-Liberles J."/>
            <person name="Steen I.H."/>
            <person name="Svebak R.M."/>
            <person name="Martinez A."/>
        </authorList>
    </citation>
    <scope>FUNCTION</scope>
    <scope>CATALYTIC ACTIVITY</scope>
    <scope>ACTIVITY REGULATION</scope>
    <scope>BIOPHYSICOCHEMICAL PROPERTIES</scope>
    <scope>MUTAGENESIS OF ILE-283</scope>
</reference>
<reference key="8">
    <citation type="journal article" date="2011" name="BMC Syst. Biol.">
        <title>Initial characterization of the human central proteome.</title>
        <authorList>
            <person name="Burkard T.R."/>
            <person name="Planyavsky M."/>
            <person name="Kaupe I."/>
            <person name="Breitwieser F.P."/>
            <person name="Buerckstuemmer T."/>
            <person name="Bennett K.L."/>
            <person name="Superti-Furga G."/>
            <person name="Colinge J."/>
        </authorList>
    </citation>
    <scope>IDENTIFICATION BY MASS SPECTROMETRY [LARGE SCALE ANALYSIS]</scope>
</reference>
<reference key="9">
    <citation type="journal article" date="2014" name="J. Proteomics">
        <title>An enzyme assisted RP-RPLC approach for in-depth analysis of human liver phosphoproteome.</title>
        <authorList>
            <person name="Bian Y."/>
            <person name="Song C."/>
            <person name="Cheng K."/>
            <person name="Dong M."/>
            <person name="Wang F."/>
            <person name="Huang J."/>
            <person name="Sun D."/>
            <person name="Wang L."/>
            <person name="Ye M."/>
            <person name="Zou H."/>
        </authorList>
    </citation>
    <scope>PHOSPHORYLATION [LARGE SCALE ANALYSIS] AT SER-16</scope>
    <scope>IDENTIFICATION BY MASS SPECTROMETRY [LARGE SCALE ANALYSIS]</scope>
    <source>
        <tissue>Liver</tissue>
    </source>
</reference>
<reference key="10">
    <citation type="journal article" date="1997" name="Nat. Struct. Biol.">
        <title>Crystal structure of the catalytic domain of human phenylalanine hydroxylase reveals the structural basis for phenylketonuria.</title>
        <authorList>
            <person name="Erlandsen H."/>
            <person name="Fusetti F."/>
            <person name="Martinez A."/>
            <person name="Hough E."/>
            <person name="Flatmark T."/>
            <person name="Stevens R.C."/>
        </authorList>
    </citation>
    <scope>X-RAY CRYSTALLOGRAPHY (2.0 ANGSTROMS) OF 117-424</scope>
</reference>
<reference key="11">
    <citation type="journal article" date="1998" name="Biochemistry">
        <title>Crystallographic analysis of the human phenylalanine hydroxylase catalytic domain with bound catechol inhibitors at 2.0-A resolution.</title>
        <authorList>
            <person name="Erlandsen H."/>
            <person name="Flatmark T."/>
            <person name="Stevens R.C."/>
            <person name="Hough E."/>
        </authorList>
    </citation>
    <scope>X-RAY CRYSTALLOGRAPHY (2.1 ANGSTROMS) OF 117-424</scope>
</reference>
<reference key="12">
    <citation type="journal article" date="1998" name="J. Biol. Chem.">
        <title>Structure of tetrameric human phenylalanine hydroxylase and its implications for phenylketonuria.</title>
        <authorList>
            <person name="Fusetti F."/>
            <person name="Erlandsen H."/>
            <person name="Flatmark T."/>
            <person name="Stevens R.C."/>
        </authorList>
    </citation>
    <scope>X-RAY CRYSTALLOGRAPHY (3.1 ANGSTROMS) OF 117-452</scope>
    <scope>SUBUNIT</scope>
</reference>
<reference key="13">
    <citation type="journal article" date="2000" name="Biochemistry">
        <title>Crystal structure and site-specific mutagenesis of pterin-bound human phenylalanine hydroxylase.</title>
        <authorList>
            <person name="Erlandsen H."/>
            <person name="Bjorgo E."/>
            <person name="Flatmark T."/>
            <person name="Stevens R.C."/>
        </authorList>
    </citation>
    <scope>X-RAY CRYSTALLOGRAPHY (2.0 ANGSTROMS) OF 118-424</scope>
</reference>
<reference key="14">
    <citation type="journal article" date="2001" name="J. Mol. Biol.">
        <title>High resolution crystal structures of the catalytic domain of human phenylalanine hydroxylase in its catalytically active Fe(II) form and binary complex with tetrahydrobiopterin.</title>
        <authorList>
            <person name="Andersen O.A."/>
            <person name="Flatmark T."/>
            <person name="Hough E."/>
        </authorList>
    </citation>
    <scope>X-RAY CRYSTALLOGRAPHY (1.5 ANGSTROMS) OF 103-427</scope>
</reference>
<reference key="15">
    <citation type="journal article" date="2020" name="Am. J. Hum. Genet.">
        <title>The Genetic Landscape and Epidemiology of Phenylketonuria.</title>
        <authorList>
            <person name="Hillert A."/>
            <person name="Anikster Y."/>
            <person name="Belanger-Quintana A."/>
            <person name="Burlina A."/>
            <person name="Burton B.K."/>
            <person name="Carducci C."/>
            <person name="Chiesa A.E."/>
            <person name="Christodoulou J."/>
            <person name="Dordevic M."/>
            <person name="Desviat L.R."/>
            <person name="Eliyahu A."/>
            <person name="Evers R.A.F."/>
            <person name="Fajkusova L."/>
            <person name="Feillet F."/>
            <person name="Bonfim-Freitas P.E."/>
            <person name="Gizewska M."/>
            <person name="Gundorova P."/>
            <person name="Karall D."/>
            <person name="Kneller K."/>
            <person name="Kutsev S.I."/>
            <person name="Leuzzi V."/>
            <person name="Levy H.L."/>
            <person name="Lichter-Konecki U."/>
            <person name="Muntau A.C."/>
            <person name="Namour F."/>
            <person name="Oltarzewski M."/>
            <person name="Paras A."/>
            <person name="Perez B."/>
            <person name="Polak E."/>
            <person name="Polyakov A.V."/>
            <person name="Porta F."/>
            <person name="Rohrbach M."/>
            <person name="Scholl-Buergi S."/>
            <person name="Specola N."/>
            <person name="Stojiljkovic M."/>
            <person name="Shen N."/>
            <person name="Santana-da Silva L.C."/>
            <person name="Skouma A."/>
            <person name="van Spronsen F."/>
            <person name="Stoppioni V."/>
            <person name="Thoeny B."/>
            <person name="Trefz F.K."/>
            <person name="Vockley J."/>
            <person name="Yu Y."/>
            <person name="Zschocke J."/>
            <person name="Hoffmann G.F."/>
            <person name="Garbade S.F."/>
            <person name="Blau N."/>
        </authorList>
    </citation>
    <scope>REVIEW ON PAH DEFICIENCY VARIANTS</scope>
    <scope>PAH VARIANTS DATABASE</scope>
</reference>
<reference key="16">
    <citation type="journal article" date="1991" name="Hum. Genet.">
        <title>The phenylketonuria locus: current knowledge about alleles and mutations of the phenylalanine hydroxylase gene in various populations.</title>
        <authorList>
            <person name="Konecki D.S."/>
            <person name="Lichter-Konecki U."/>
        </authorList>
    </citation>
    <scope>REVIEW ON PAH DEFICIENCY VARIANTS</scope>
</reference>
<reference key="17">
    <citation type="journal article" date="1990" name="J. Inherit. Metab. Dis.">
        <title>Heterogeneity of phenylketonuria at the clinical, protein and DNA levels.</title>
        <authorList>
            <person name="Cotton R.G."/>
        </authorList>
    </citation>
    <scope>REVIEW ON PAH DEFICIENCY VARIANTS</scope>
</reference>
<reference key="18">
    <citation type="journal article" date="1992" name="Hum. Mutat.">
        <title>Molecular basis of phenylketonuria and related hyperphenylalaninemias: mutations and polymorphisms in the human phenylalanine hydroxylase gene.</title>
        <authorList>
            <person name="Eisensmith R.C."/>
            <person name="Woo S.L.C."/>
        </authorList>
    </citation>
    <scope>VARIANTS PAH DEFICIENCY ASP-56; SER-161; VAL-247; VAL-255; VAL-259; PHE-273; ILE-276; ASP-277; GLY-322; THR-322; THR-345; VAL-348 AND PRO-418</scope>
    <scope>REVIEW</scope>
</reference>
<reference key="19">
    <citation type="journal article" date="1996" name="Nucleic Acids Res.">
        <title>PAH Mutation Analysis Consortium Database: a database for disease-producing and other allelic variation at the human PAH locus.</title>
        <authorList>
            <person name="Hoang L."/>
            <person name="Byck S."/>
            <person name="Prevost L."/>
            <person name="Scriver C.R."/>
        </authorList>
    </citation>
    <scope>DATABASE OF PAH DEFICIENCY VARIANTS</scope>
</reference>
<reference key="20">
    <citation type="journal article" date="1988" name="Biochemistry">
        <title>Phenylalanine hydroxylase deficiency caused by a single base substitution in an exon of the human phenylalanine hydroxylase gene.</title>
        <authorList>
            <person name="Lichter-Konecki U."/>
            <person name="Konecki D.S."/>
            <person name="Dilella A.G."/>
            <person name="Brayton K."/>
            <person name="Marvit J."/>
            <person name="Hahn T.M."/>
            <person name="Trefz F.K."/>
            <person name="Woo S.L.C."/>
        </authorList>
    </citation>
    <scope>VARIANT PAH DEFICIENCY PRO-311</scope>
</reference>
<reference key="21">
    <citation type="journal article" date="1989" name="Am. J. Hum. Genet.">
        <title>Molecular genetics of phenylketonuria in Mediterranean countries: a mutation associated with partial phenylalanine hydroxylase deficiency.</title>
        <authorList>
            <person name="Lyonnet S."/>
            <person name="Caillaud C."/>
            <person name="Rey F."/>
            <person name="Berthelon M."/>
            <person name="Frezal J."/>
            <person name="Rey J."/>
            <person name="Munnich A."/>
        </authorList>
    </citation>
    <scope>VARIANT PAH DEFICIENCY LYS-280</scope>
</reference>
<reference key="22">
    <citation type="journal article" date="1989" name="Mol. Biol. Med.">
        <title>Phenylketonuria in the Greek population. Haplotype analysis of the phenylalanine hydroxylase gene and identification of a PKU mutation.</title>
        <authorList>
            <person name="Hofman K.J."/>
            <person name="Antonarakis S.E."/>
            <person name="Missiou-Tsangaraki S."/>
            <person name="Boehm C.D."/>
            <person name="Valle D."/>
        </authorList>
    </citation>
    <scope>VARIANT PAH DEFICIENCY PRO-311</scope>
</reference>
<reference key="23">
    <citation type="journal article" date="1990" name="Hum. Genet.">
        <title>Two mutations within the coding sequence of the phenylalanine hydroxylase gene.</title>
        <authorList>
            <person name="Svensson E."/>
            <person name="Andersson B."/>
            <person name="Hagenfeldt L."/>
        </authorList>
    </citation>
    <scope>VARIANT PAH DEFICIENCY LEU-364 DEL</scope>
</reference>
<reference key="24">
    <citation type="journal article" date="1991" name="Am. J. Hum. Genet.">
        <title>Screening for mutations in the phenylalanine hydroxylase gene from Italian patients with phenylketonuria by using the chemical cleavage method: a new splice mutation.</title>
        <authorList>
            <person name="Dianzani I."/>
            <person name="Forrest S.M."/>
            <person name="Camaschella C."/>
            <person name="Saglio G."/>
            <person name="Ponzone A."/>
            <person name="Cotton R.G."/>
        </authorList>
    </citation>
    <scope>VARIANT PAH DEFICIENCY GLN-261</scope>
</reference>
<reference key="25">
    <citation type="journal article" date="1991" name="Am. J. Hum. Genet.">
        <title>Phenylketonuria in U.S. blacks: molecular analysis of the phenylalanine hydroxylase gene.</title>
        <authorList>
            <person name="Hofman K.J."/>
            <person name="Steel G."/>
            <person name="Kazazian H.H. Jr."/>
            <person name="Valle D."/>
        </authorList>
    </citation>
    <scope>VARIANT PAH DEFICIENCY SER-255</scope>
</reference>
<reference key="26">
    <citation type="journal article" date="1991" name="Genomics">
        <title>Phenylketonuria missense mutations in the Mediterranean.</title>
        <authorList>
            <person name="Okano Y."/>
            <person name="Wang T."/>
            <person name="Eisensmith R.C."/>
            <person name="Longhi R."/>
            <person name="Riva E."/>
            <person name="Giovannini M."/>
            <person name="Cerone R."/>
            <person name="Romano C."/>
            <person name="Woo S.L.C."/>
        </authorList>
    </citation>
    <scope>VARIANTS PAH DEFICIENCY TRP-252 AND LEU-281</scope>
</reference>
<reference key="27">
    <citation type="journal article" date="1991" name="Genomics">
        <title>Phenylalanine hydroxylase gene: novel missense mutation in exon 7 causing severe phenylketonuria.</title>
        <authorList>
            <person name="Dworniczak B."/>
            <person name="Grudda K."/>
            <person name="Stumper J."/>
            <person name="Bartholome K."/>
            <person name="Aulehla-Scholz C."/>
            <person name="Horst J."/>
        </authorList>
    </citation>
    <scope>VARIANT PAH DEFICIENCY LEU-281</scope>
</reference>
<reference key="28">
    <citation type="journal article" date="1991" name="Hum. Genet.">
        <title>The identification of two mis-sense mutations at the PAH gene locus in a Turkish patient with phenylketonuria.</title>
        <authorList>
            <person name="Konecki D.S."/>
            <person name="Schlotter M."/>
            <person name="Trefz F.K."/>
            <person name="Lichter-Konecki U."/>
        </authorList>
    </citation>
    <scope>VARIANTS PAH DEFICIENCY SER-48 AND GLY-221</scope>
</reference>
<reference key="29">
    <citation type="journal article" date="1991" name="J. Biol. Chem.">
        <title>A 3-base pair in-frame deletion of the phenylalanine hydroxylase gene results in a kinetic variant of phenylketonuria.</title>
        <authorList>
            <person name="Caillaud C."/>
            <person name="Lyonnet S."/>
            <person name="Rey F."/>
            <person name="Melle D."/>
            <person name="Frebourg T."/>
            <person name="Berthelon M."/>
            <person name="Vilarinho L."/>
            <person name="Vaz Osorio R."/>
            <person name="Rey J."/>
            <person name="Munnich A."/>
        </authorList>
    </citation>
    <scope>VARIANT PAH DEFICIENCY ILE-94 DEL</scope>
</reference>
<reference key="30">
    <citation type="journal article" date="1992" name="Genomics">
        <title>Molecular basis for nonphenylketonuria hyperphenylalaninemia.</title>
        <authorList>
            <person name="Economou-Petersen E."/>
            <person name="Henriksen K.F."/>
            <person name="Guldberg P."/>
            <person name="Guettler F."/>
        </authorList>
    </citation>
    <scope>VARIANTS PAH DEFICIENCY VAL-306 AND ASN-415</scope>
</reference>
<reference key="31">
    <citation type="journal article" date="1992" name="Hum. Genet.">
        <title>Identification of a missense phenylketonuria mutation at codon 408 in Chinese.</title>
        <authorList>
            <person name="Lin C.H."/>
            <person name="Hsiao K.J."/>
            <person name="Tsai T.F."/>
            <person name="Chao H.K."/>
            <person name="Su T.S."/>
        </authorList>
    </citation>
    <scope>VARIANTS PAH DEFICIENCY GLN-408 AND TRP-408</scope>
</reference>
<reference key="32">
    <citation type="journal article" date="1992" name="Hum. Mol. Genet.">
        <title>A new 15 bp deletion in exon 11 of the phenylalanine hydroxylase gene in phenylketonuria.</title>
        <authorList>
            <person name="Jaruzelska J."/>
            <person name="Melle D."/>
            <person name="Matuszak R."/>
            <person name="Borski K."/>
            <person name="Munnich A."/>
        </authorList>
    </citation>
    <scope>VARIANT PAH DEFICIENCY 364-LEU--GLU-368 DEL</scope>
</reference>
<reference key="33">
    <citation type="journal article" date="1992" name="Hum. Mol. Genet.">
        <title>A new PKU mutation associated with haplotype 12.</title>
        <authorList>
            <person name="Desviat L.R."/>
            <person name="Perez B."/>
            <person name="Ugarte M."/>
        </authorList>
    </citation>
    <scope>VARIANT PAH DEFICIENCY LEU-244</scope>
</reference>
<reference key="34">
    <citation type="journal article" date="1993" name="Genomics">
        <title>Molecular analysis of phenylketonuria in Denmark: 99% of the mutations detected by denaturing gradient gel electrophoresis.</title>
        <authorList>
            <person name="Guldberg P."/>
            <person name="Henriksen K.F."/>
            <person name="Guettler F."/>
        </authorList>
    </citation>
    <scope>VARIANTS PAH DEFICIENCY</scope>
</reference>
<reference key="35">
    <citation type="journal article" date="1993" name="Hum. Mol. Genet.">
        <title>Illegitimate transcription of the phenylalanine hydroxylase gene in lymphocytes for identification of mutations in phenylketonuria.</title>
        <authorList>
            <person name="Abadie V."/>
            <person name="Jaruzelska J."/>
            <person name="Lyonnet S."/>
            <person name="Millasseau P."/>
            <person name="Berthelon M."/>
            <person name="Rey F."/>
            <person name="Munnich A."/>
            <person name="Rey J."/>
        </authorList>
    </citation>
    <scope>VARIANT PAH DEFICIENCY GLY-390</scope>
</reference>
<reference key="36">
    <citation type="journal article" date="1993" name="Hum. Mol. Genet.">
        <title>A novel missense mutation in the phenylalanine hydroxylase gene of a homozygous Pakistani patient with non-PKU hyperphenylalaninemia.</title>
        <authorList>
            <person name="Guldberg P."/>
            <person name="Lou H.C."/>
            <person name="Henriksen K.F."/>
            <person name="Mikkelsen I."/>
            <person name="Olsen B."/>
            <person name="Holck B."/>
            <person name="Guettler F."/>
        </authorList>
    </citation>
    <scope>VARIANT PAH DEFICIENCY SER-98</scope>
</reference>
<reference key="37">
    <citation type="journal article" date="1993" name="J. Inherit. Metab. Dis.">
        <title>Identification of a new missense mutation in Japanese phenylketonuric patients.</title>
        <authorList>
            <person name="Goebel-Schreiner B."/>
            <person name="Schreiner R."/>
        </authorList>
    </citation>
    <scope>VARIANT PAH DEFICIENCY VAL-276</scope>
</reference>
<reference key="38">
    <citation type="journal article" date="1994" name="Genomics">
        <title>Molecular heterogeneity of nonphenylketonuria hyperphenylalaninemia in 25 Danish patients.</title>
        <authorList>
            <person name="Guldberg P."/>
            <person name="Henriksen K.F."/>
            <person name="Thoeny B."/>
            <person name="Blau N."/>
            <person name="Guettler F."/>
        </authorList>
    </citation>
    <scope>VARIANTS PAH DEFICIENCY VAL-47; ARG-87; LEU-176 AND ALA-245</scope>
</reference>
<reference key="39">
    <citation type="journal article" date="1994" name="Hum. Mutat.">
        <title>Five novel missense mutations of the phenylalanine hydroxylase gene in phenylketonuria.</title>
        <authorList>
            <person name="Benit P."/>
            <person name="Rey F."/>
            <person name="Melle D."/>
            <person name="Munnich A."/>
            <person name="Rey J."/>
        </authorList>
    </citation>
    <scope>VARIANTS PAH DEFICIENCY THR-164; ALA-171; SER-239; GLN-252 AND LEU-331</scope>
</reference>
<reference key="40">
    <citation type="journal article" date="1996" name="Hum. Mutat.">
        <title>PKU mutation (D143G) associated with an apparent high residual enzyme activity: expression of a kinetic variant form of phenylalanine hydroxylase in three different systems.</title>
        <authorList>
            <person name="Knappskog P.M."/>
            <person name="Eiken H.G."/>
            <person name="Martinez A."/>
            <person name="Bruland O."/>
            <person name="Apold J."/>
            <person name="Flatmark T."/>
        </authorList>
    </citation>
    <scope>CHARACTERIZATION OF VARIANT PAH DEFICIENCY GLY-143</scope>
</reference>
<reference key="41">
    <citation type="journal article" date="1996" name="Hum. Mutat.">
        <title>Phenylalanine hydroxylase deficiency in a population in Germany: mutational profile and nine novel mutations.</title>
        <authorList>
            <person name="Guldberg P."/>
            <person name="Mallmann R."/>
            <person name="Henriksen K.F."/>
            <person name="Guettler F."/>
        </authorList>
    </citation>
    <scope>VARIANTS PAH DEFICIENCY LEU-40; SER-46; SER-48; 63-THR-HIS-64 DELINS PRO-ASN; THR-65; SER-68; CYS-241; ALA-245; GLN-261; LYS-280; LEU-281; CYS-299; GLY-390; HIS-394; VAL-403; TRP-408 AND CYS-414</scope>
</reference>
<reference key="42">
    <citation type="journal article" date="1997" name="Hum. Genet.">
        <title>Two novel PAH gene mutations detected in Italian phenylketonuric patients.</title>
        <authorList>
            <person name="Argiolas A."/>
            <person name="Bosco P."/>
            <person name="Cali F."/>
            <person name="Ceratto N."/>
            <person name="Anello G."/>
            <person name="Riva E."/>
            <person name="Biasucci G."/>
            <person name="Carducci C."/>
            <person name="Romano V."/>
        </authorList>
    </citation>
    <scope>VARIANTS PAH DEFICIENCY CYS-204 AND SER-207</scope>
</reference>
<reference key="43">
    <citation type="journal article" date="1997" name="Hum. Mutat.">
        <title>Prediction of multiple hypermutable codons in the human PAH gene: codon 280 contains recurrent mutations in Quebec and other populations.</title>
        <authorList>
            <person name="Byck S."/>
            <person name="Tyfield L."/>
            <person name="Carter K."/>
            <person name="Scriver C.R."/>
        </authorList>
    </citation>
    <scope>VARIANTS PAH DEFICIENCY</scope>
    <scope>VARIANTS PAH DEFICIENCY GLN-158; TRP-158; LEU-176; PRO-176; ILE-230; CYS-241; HIS-241; LEU-241; GLN-243; GLN-252; GLY-252; TRP-252; GLN-261; PRO-261; LYS-280; LEU-281; CYS-297; HIS-297; THR-322; MET-380; LEU-388; MET-388; GLN-408; TRP-408; PRO-413; SER-413 AND ASN-415</scope>
</reference>
<reference key="44">
    <citation type="journal article" date="1998" name="Am. J. Hum. Genet.">
        <title>A European multicenter study of phenylalanine hydroxylase deficiency: classification of 105 mutations and a general system for genotype-based prediction of metabolic phenotype.</title>
        <authorList>
            <person name="Guldberg P."/>
            <person name="Rey F."/>
            <person name="Zschocke J."/>
            <person name="Romano V."/>
            <person name="Francois B."/>
            <person name="Michiels L."/>
            <person name="Ullrich K."/>
            <person name="Hoffmann G.F."/>
            <person name="Burgard P."/>
            <person name="Schmidt H."/>
            <person name="Meli C."/>
            <person name="Riva E."/>
            <person name="Dianzani I."/>
            <person name="Ponzone A."/>
            <person name="Rey J."/>
            <person name="Guettler F."/>
        </authorList>
    </citation>
    <scope>VARIANTS PAH DEFICIENCY PHE-41; 63-THR-HIS-64 DELINS PRO-ASN; PRO-67; ILE-92; THR-174; PRO-194; VAL-218; PRO-231; SER-239; GLU-245; GLY-252; VAL-259; ASN-282; PHE-283; PRO-303; HIS-314; LEU-331; PHE-333; THR-342; THR-350; HIS-366; ALA-394; GLY-395 AND PRO-395</scope>
</reference>
<reference key="45">
    <citation type="journal article" date="1998" name="Hum. Mutat.">
        <title>In vitro expression analysis of mutations in phenylalanine hydroxylase: linking genotype to phenotype and structure to function.</title>
        <authorList>
            <person name="Waters P.J."/>
            <person name="Parniak M.A."/>
            <person name="Nowacki P."/>
            <person name="Scriver C.R."/>
        </authorList>
    </citation>
    <scope>CHARACTERIZATION OF VARIANTS</scope>
    <scope>VARIANTS PAH DEFICIENCY PRO-231 AND THR-259</scope>
</reference>
<reference key="46">
    <citation type="journal article" date="1998" name="Hum. Mutat.">
        <title>Eight new mutations of the phenylalanine hydroxylase gene in Italian patients with hyperphenylalaninemia.</title>
        <authorList>
            <person name="Bosco P."/>
            <person name="Cali F."/>
            <person name="Meli C."/>
            <person name="Mollica F."/>
            <person name="Zammarchi E."/>
            <person name="Cerone R."/>
            <person name="Vanni C."/>
            <person name="Palillo L."/>
            <person name="Greco D."/>
            <person name="Romano V."/>
        </authorList>
    </citation>
    <scope>VARIANTS PAH DEFICIENCY SER-48; ASN-65; PRO-213 AND ASN-283</scope>
    <scope>VARIANTS PAH DEFICIENCY SER-48; LEU-55; TYR-201 AND LEU-269</scope>
</reference>
<reference key="47">
    <citation type="journal article" date="1998" name="Hum. Mutat.">
        <title>Molecular basis of phenylketonuria in Venezuela: presence of two novel null mutations.</title>
        <authorList>
            <person name="de Lucca M."/>
            <person name="Perez B."/>
            <person name="Desviat L.R."/>
            <person name="Ugarte M."/>
        </authorList>
    </citation>
    <scope>VARIANTS PAH DEFICIENCY GLN-243; LEU-349 AND TRP-408</scope>
</reference>
<reference key="48">
    <citation type="journal article" date="1998" name="Hum. Mutat.">
        <title>Two novel mutations in exon 11 of the PAH gene (1163/1164 del TG and P362T) associated with classic phenylketonuria and mild phenylketonuria.</title>
        <authorList>
            <person name="Mallolas J."/>
            <person name="Campistol J."/>
            <person name="Lambruscini N."/>
            <person name="Vilaseca M.A."/>
            <person name="Cambra J.F."/>
            <person name="Estivill X."/>
            <person name="Milo M."/>
        </authorList>
    </citation>
    <scope>VARIANT PAH DEFICIENCY THR-362</scope>
</reference>
<reference key="49">
    <citation type="journal article" date="1998" name="Hum. Mutat. Suppl.">
        <title>Identification of three novel mutations in Korean phenylketonuria patients: R53H, N207D, and Y325X.</title>
        <authorList>
            <person name="Park Y.S."/>
            <person name="Seoung C.S."/>
            <person name="Lee S.W."/>
            <person name="Oh K.H."/>
            <person name="Lee D.H."/>
            <person name="Yim J."/>
        </authorList>
    </citation>
    <scope>VARIANTS PAH DEFICIENCY HIS-53; ASP-207 AND LEU-388</scope>
</reference>
<reference key="50">
    <citation type="journal article" date="1998" name="Hum. Mutat. Suppl.">
        <title>Identification of seven new mutations in the phenylalanine hydroxylase gene, associated with hyperphenylalaninemia in the Belgian population.</title>
        <authorList>
            <person name="Michiels L."/>
            <person name="Francois B."/>
            <person name="Raus J."/>
            <person name="Vandevyver C."/>
        </authorList>
    </citation>
    <scope>VARIANTS PAH DEFICIENCY PHE-39 DEL; THR-65; GLN-158; ILE-167; ALA-190; CYS-241 AND TRP-408</scope>
</reference>
<reference key="51">
    <citation type="journal article" date="1998" name="Hum. Mutat.">
        <title>Mutation spectrum and phenylalanine hydroxylase RFLP/VNTR background in 44 Romanian phenylketonuric alleles.</title>
        <authorList>
            <person name="Popescu T."/>
            <person name="Blazkova M."/>
            <person name="Kozak L."/>
            <person name="Jebeleanu G."/>
            <person name="Popescu A."/>
        </authorList>
    </citation>
    <scope>VARIANTS PAH DEFICIENCY GLY-178 AND THR-225</scope>
</reference>
<reference key="52">
    <citation type="journal article" date="1998" name="Hum. Mutat.">
        <title>Alterations in protein aggregation and degradation due to mild and severe missense mutations (A104D, R157N) in the human phenylalanine hydroxylase gene.</title>
        <authorList>
            <person name="Waters P.J."/>
            <person name="Parniak M.A."/>
            <person name="Hewson A.S."/>
            <person name="Scriver C.R."/>
        </authorList>
    </citation>
    <scope>CHARACTERIZATION OF VARIANTS PAH DEFICIENCY ASP-104 AND ASN-157</scope>
</reference>
<reference key="53">
    <citation type="journal article" date="1998" name="J. Hum. Genet.">
        <title>Mutation analysis of the phenylalanine hydroxylase gene and its clinical implications in two Japanese patients with non-phenylketonuria hyperphenylalaninemia.</title>
        <authorList>
            <person name="Kibayashi M."/>
            <person name="Nagao M."/>
            <person name="Chiba S."/>
        </authorList>
    </citation>
    <scope>VARIANTS PAH DEFICIENCY CYS-241; GLN-243 AND PRO-413</scope>
</reference>
<reference key="54">
    <citation type="journal article" date="1999" name="Eur. J. Pediatr.">
        <title>Maternal phenylketonuria in two Sicilian families identified by maternal blood phenylalanine level screening and identification of a new phenylalanine hydroxylase gene mutation (P407L).</title>
        <authorList>
            <person name="Corsello G."/>
            <person name="Bosco P."/>
            <person name="Cali F."/>
            <person name="Greco D."/>
            <person name="Cammarata M."/>
            <person name="Ciaccio M."/>
            <person name="Piccione M."/>
            <person name="Romano V."/>
        </authorList>
    </citation>
    <scope>VARIANT PAH DEFICIENCY LEU-407</scope>
</reference>
<reference key="55">
    <citation type="journal article" date="2000" name="Hum. Mutat.">
        <title>Phenylketonuria and hyperphenylalaninemia in eastern Germany: a characteristic molecular profile and 15 novel mutations.</title>
        <authorList>
            <person name="Hennermann J.B."/>
            <person name="Vetter B."/>
            <person name="Wolf C."/>
            <person name="Windt E."/>
            <person name="Buehrdel P."/>
            <person name="Seidel J."/>
            <person name="Moench E."/>
            <person name="Kulozik A.E."/>
        </authorList>
    </citation>
    <scope>VARIANTS PAH DEFICIENCY LEU-20; LEU-39; PRO-41; SER-48; LEU-55; THR-65; SER-68; TYR-84; ASP-104; CYS-110; PRO-155; GLN-158; GLN-183; ALA-190; THR-211; ILE-230; PHE-231; GLN-243; ALA-245; TRP-252; GLN-261; LEU-281; CYS-299; SER-300; VAL-306; VAL-309; CYS-325; ASP-330; ARG-344; VAL-344; VAL-348; PRO-349; CYS-386; GLY-390; PRO-395; VAL-403; TRP-408; SER-410 AND CYS-414</scope>
</reference>
<reference key="56">
    <citation type="journal article" date="2001" name="Am. J. Hum. Genet.">
        <title>Missense mutations in the N-terminal domain of human phenylalanine hydroxylase interfere with binding of regulatory phenylalanine.</title>
        <authorList>
            <person name="Gjetting T."/>
            <person name="Petersen M."/>
            <person name="Guldberg P."/>
            <person name="Guettler F."/>
        </authorList>
    </citation>
    <scope>CHARACTERIZATION OF VARIANTS PAH DEFICIENCY</scope>
</reference>
<reference key="57">
    <citation type="journal article" date="2001" name="Hum. Mutat.">
        <title>Mutations of the phenylalanine hydroxylase (PAH) gene in Brazilian patients with phenylketonuria.</title>
        <authorList>
            <person name="Acosta A.X."/>
            <person name="Silva W.A. Jr."/>
            <person name="Carvalho T.M."/>
            <person name="Gomes M."/>
            <person name="Zago M.A."/>
        </authorList>
    </citation>
    <scope>VARIANTS PAH DEFICIENCY VAL-145; LEU-176; ALA-205; SER-240; CYS-241; LYS-270; GLU-274; SER-300; PRO-311; THR-318; VAL-348; GLY-357 AND GLY-390</scope>
</reference>
<reference key="58">
    <citation type="journal article" date="2001" name="Hum. Mutat.">
        <title>Molecular analysis of phenylketonuria (PKU) in newborns from Texas.</title>
        <authorList>
            <person name="Yang Y."/>
            <person name="Drummond-Borg M."/>
            <person name="Garcia-Heras J."/>
        </authorList>
    </citation>
    <scope>VARIANTS PAH DEFICIENCY</scope>
</reference>
<reference key="59">
    <citation type="journal article" date="2001" name="Mol. Genet. Metab.">
        <title>A phenylalanine hydroxylase amino acid polymorphism with implications for molecular diagnostics.</title>
        <authorList>
            <person name="Gjetting T."/>
            <person name="Romstad A."/>
            <person name="Haavik J."/>
            <person name="Knappskog P.M."/>
            <person name="Acosta A.X."/>
            <person name="Silva W.A. Jr."/>
            <person name="Zago M.A."/>
            <person name="Guldberg P."/>
            <person name="Guettler F."/>
        </authorList>
    </citation>
    <scope>VARIANTS PAH DEFICIENCY TRP-252 AND THR-318</scope>
    <scope>VARIANT GLU-274</scope>
</reference>
<reference key="60">
    <citation type="journal article" date="2002" name="Hum. Genet.">
        <title>Identification and characterization of a novel liver-specific enhancer of the human phenylalanine hydroxylase gene.</title>
        <authorList>
            <person name="Chen K.J."/>
            <person name="Chao H.K."/>
            <person name="Hsiao K.J."/>
            <person name="Su T.S."/>
        </authorList>
    </citation>
    <scope>VARIANT PAH DEFICIENCY GLY-76</scope>
</reference>
<reference key="61">
    <citation type="journal article" date="2002" name="N. Engl. J. Med.">
        <title>Tetrahydrobiopterin as an alternative treatment for mild phenylketonuria.</title>
        <authorList>
            <person name="Muntau A.C."/>
            <person name="Roschinger W."/>
            <person name="Habich M."/>
            <person name="Demmelmair H."/>
            <person name="Hoffmann B."/>
            <person name="Sommerhoff C.P."/>
            <person name="Roscher A.A."/>
        </authorList>
    </citation>
    <scope>VARIANTS PAH DEFICIENCY LEU-39; SER-48; LEU-55; ASP-61; SER-65; THR-65; VAL-65; GLN-158; GLN-170; MET-177; ALA-245; GLN-261; LEU-275; LEU-281; SER-300; TYR-310; SER-314; GLY-390; VAL-403; TRP-408; PRO-413; CYS-414; ASN-415 AND HIS-417</scope>
</reference>
<reference key="62">
    <citation type="journal article" date="2008" name="Am. J. Hum. Genet.">
        <title>Loss of function in phenylketonuria is caused by impaired molecular motions and conformational instability.</title>
        <authorList>
            <person name="Gersting S.W."/>
            <person name="Kemter K.F."/>
            <person name="Staudigl M."/>
            <person name="Messing D.D."/>
            <person name="Danecka M.K."/>
            <person name="Lagler F.B."/>
            <person name="Sommerhoff C.P."/>
            <person name="Roscher A.A."/>
            <person name="Muntau A.C."/>
        </authorList>
    </citation>
    <scope>CHARACTERIZATION OF VARIANTS PAH DEFICIENCY LEU-55; SER-65; GLN-170; LEU-275; SER-300; TYR-310; SER-314; TRP-408; CYS-414 AND HIS-417</scope>
</reference>
<reference key="63">
    <citation type="journal article" date="2013" name="Clin. Biochem.">
        <title>Mutation analysis in Hyperphenylalaninemia patients from South Italy.</title>
        <authorList>
            <person name="Trunzo R."/>
            <person name="Santacroce R."/>
            <person name="D'Andrea G."/>
            <person name="Longo V."/>
            <person name="De Girolamo G."/>
            <person name="Dimatteo C."/>
            <person name="Leccese A."/>
            <person name="Lillo V."/>
            <person name="Papadia F."/>
            <person name="Margaglione M."/>
        </authorList>
    </citation>
    <scope>VARIANTS PAH DEFICIENCY PHE-39 DEL; VAL-65; LEU-121; TYR-196; TYR-201; ILE-230; TRP-252; GLN-261; SER-300; VAL-306; MET-380; GLY-390; VAL-403 AND TRP-408</scope>
</reference>
<reference key="64">
    <citation type="journal article" date="2013" name="J. Inherit. Metab. Dis.">
        <title>Prevalence of tetrahydrobiopterine (BH4)-responsive alleles among Austrian patients with PAH deficiency: comprehensive results from molecular analysis in 147 patients.</title>
        <authorList>
            <person name="Sterl E."/>
            <person name="Paul K."/>
            <person name="Paschke E."/>
            <person name="Zschocke J."/>
            <person name="Brunner-Krainz M."/>
            <person name="Windisch E."/>
            <person name="Konstantopoulou V."/>
            <person name="Moslinger D."/>
            <person name="Karall D."/>
            <person name="Scholl-Burgi S."/>
            <person name="Sperl W."/>
            <person name="Lagler F."/>
            <person name="Plecko B."/>
        </authorList>
    </citation>
    <scope>VARIANTS PAH DEFICIENCY TYR-290; VAL-322 AND SER-421</scope>
</reference>
<reference key="65">
    <citation type="journal article" date="2012" name="Mol. Genet. Metab.">
        <title>Five novel mutations and two large deletions in a population analysis of the phenylalanine hydroxylase gene.</title>
        <authorList>
            <person name="Groselj U."/>
            <person name="Tansek M.Z."/>
            <person name="Kovac J."/>
            <person name="Hovnik T."/>
            <person name="Podkrajsek K.T."/>
            <person name="Battelino T."/>
        </authorList>
    </citation>
    <scope>VARIANTS PAH DEFICIENCY ALA-45; SER-48; PRO-62; SER-157; GLN-158; LEU-177; GLY-178; ALA-190; HIS-226; ALA-245; TRP-252; GLN-261; LYS-280; LEU-281; SER-300; PRO-349; GLY-390; VAL-403; TRP-408 AND ASN-415</scope>
</reference>
<keyword id="KW-0002">3D-structure</keyword>
<keyword id="KW-0021">Allosteric enzyme</keyword>
<keyword id="KW-0903">Direct protein sequencing</keyword>
<keyword id="KW-0225">Disease variant</keyword>
<keyword id="KW-0408">Iron</keyword>
<keyword id="KW-0479">Metal-binding</keyword>
<keyword id="KW-0503">Monooxygenase</keyword>
<keyword id="KW-0560">Oxidoreductase</keyword>
<keyword id="KW-0585">Phenylalanine catabolism</keyword>
<keyword id="KW-0586">Phenylketonuria</keyword>
<keyword id="KW-0597">Phosphoprotein</keyword>
<keyword id="KW-1267">Proteomics identification</keyword>
<keyword id="KW-1185">Reference proteome</keyword>
<evidence type="ECO:0000250" key="1">
    <source>
        <dbReference type="UniProtKB" id="P04176"/>
    </source>
</evidence>
<evidence type="ECO:0000255" key="2">
    <source>
        <dbReference type="PROSITE-ProRule" id="PRU01007"/>
    </source>
</evidence>
<evidence type="ECO:0000269" key="3">
    <source>
    </source>
</evidence>
<evidence type="ECO:0000269" key="4">
    <source>
    </source>
</evidence>
<evidence type="ECO:0000269" key="5">
    <source>
    </source>
</evidence>
<evidence type="ECO:0000269" key="6">
    <source>
    </source>
</evidence>
<evidence type="ECO:0000269" key="7">
    <source>
    </source>
</evidence>
<evidence type="ECO:0000269" key="8">
    <source>
    </source>
</evidence>
<evidence type="ECO:0000269" key="9">
    <source>
    </source>
</evidence>
<evidence type="ECO:0000269" key="10">
    <source>
    </source>
</evidence>
<evidence type="ECO:0000269" key="11">
    <source>
    </source>
</evidence>
<evidence type="ECO:0000269" key="12">
    <source>
    </source>
</evidence>
<evidence type="ECO:0000269" key="13">
    <source>
    </source>
</evidence>
<evidence type="ECO:0000269" key="14">
    <source>
    </source>
</evidence>
<evidence type="ECO:0000269" key="15">
    <source>
    </source>
</evidence>
<evidence type="ECO:0000269" key="16">
    <source>
    </source>
</evidence>
<evidence type="ECO:0000269" key="17">
    <source>
    </source>
</evidence>
<evidence type="ECO:0000269" key="18">
    <source>
    </source>
</evidence>
<evidence type="ECO:0000269" key="19">
    <source>
    </source>
</evidence>
<evidence type="ECO:0000269" key="20">
    <source>
    </source>
</evidence>
<evidence type="ECO:0000269" key="21">
    <source>
    </source>
</evidence>
<evidence type="ECO:0000269" key="22">
    <source>
    </source>
</evidence>
<evidence type="ECO:0000269" key="23">
    <source>
    </source>
</evidence>
<evidence type="ECO:0000269" key="24">
    <source>
    </source>
</evidence>
<evidence type="ECO:0000269" key="25">
    <source>
    </source>
</evidence>
<evidence type="ECO:0000269" key="26">
    <source>
    </source>
</evidence>
<evidence type="ECO:0000269" key="27">
    <source>
    </source>
</evidence>
<evidence type="ECO:0000269" key="28">
    <source>
    </source>
</evidence>
<evidence type="ECO:0000269" key="29">
    <source>
    </source>
</evidence>
<evidence type="ECO:0000269" key="30">
    <source>
    </source>
</evidence>
<evidence type="ECO:0000269" key="31">
    <source>
    </source>
</evidence>
<evidence type="ECO:0000269" key="32">
    <source>
    </source>
</evidence>
<evidence type="ECO:0000269" key="33">
    <source>
    </source>
</evidence>
<evidence type="ECO:0000269" key="34">
    <source>
    </source>
</evidence>
<evidence type="ECO:0000269" key="35">
    <source>
    </source>
</evidence>
<evidence type="ECO:0000269" key="36">
    <source>
    </source>
</evidence>
<evidence type="ECO:0000269" key="37">
    <source>
    </source>
</evidence>
<evidence type="ECO:0000269" key="38">
    <source>
    </source>
</evidence>
<evidence type="ECO:0000269" key="39">
    <source>
    </source>
</evidence>
<evidence type="ECO:0000269" key="40">
    <source>
    </source>
</evidence>
<evidence type="ECO:0000269" key="41">
    <source>
    </source>
</evidence>
<evidence type="ECO:0000269" key="42">
    <source>
    </source>
</evidence>
<evidence type="ECO:0000269" key="43">
    <source>
    </source>
</evidence>
<evidence type="ECO:0000269" key="44">
    <source>
    </source>
</evidence>
<evidence type="ECO:0000269" key="45">
    <source>
    </source>
</evidence>
<evidence type="ECO:0000269" key="46">
    <source>
    </source>
</evidence>
<evidence type="ECO:0000269" key="47">
    <source>
    </source>
</evidence>
<evidence type="ECO:0000269" key="48">
    <source>
    </source>
</evidence>
<evidence type="ECO:0000269" key="49">
    <source>
    </source>
</evidence>
<evidence type="ECO:0000269" key="50">
    <source>
    </source>
</evidence>
<evidence type="ECO:0000269" key="51">
    <source>
    </source>
</evidence>
<evidence type="ECO:0000269" key="52">
    <source>
    </source>
</evidence>
<evidence type="ECO:0000269" key="53">
    <source>
    </source>
</evidence>
<evidence type="ECO:0000269" key="54">
    <source>
    </source>
</evidence>
<evidence type="ECO:0000305" key="55"/>
<evidence type="ECO:0007744" key="56">
    <source>
    </source>
</evidence>
<evidence type="ECO:0007829" key="57">
    <source>
        <dbReference type="PDB" id="1J8U"/>
    </source>
</evidence>
<evidence type="ECO:0007829" key="58">
    <source>
        <dbReference type="PDB" id="1MMT"/>
    </source>
</evidence>
<evidence type="ECO:0007829" key="59">
    <source>
        <dbReference type="PDB" id="1PAH"/>
    </source>
</evidence>
<evidence type="ECO:0007829" key="60">
    <source>
        <dbReference type="PDB" id="5FII"/>
    </source>
</evidence>
<evidence type="ECO:0007829" key="61">
    <source>
        <dbReference type="PDB" id="6HYC"/>
    </source>
</evidence>
<evidence type="ECO:0007829" key="62">
    <source>
        <dbReference type="PDB" id="6N1K"/>
    </source>
</evidence>
<protein>
    <recommendedName>
        <fullName>Phenylalanine-4-hydroxylase</fullName>
        <shortName>PAH</shortName>
        <ecNumber evidence="22 24">1.14.16.1</ecNumber>
    </recommendedName>
    <alternativeName>
        <fullName>Phe-4-monooxygenase</fullName>
    </alternativeName>
</protein>
<comment type="function">
    <text evidence="22 24">Catalyzes the hydroxylation of L-phenylalanine to L-tyrosine.</text>
</comment>
<comment type="catalytic activity">
    <reaction evidence="22 24">
        <text>(6R)-L-erythro-5,6,7,8-tetrahydrobiopterin + L-phenylalanine + O2 = (4aS,6R)-4a-hydroxy-L-erythro-5,6,7,8-tetrahydrobiopterin + L-tyrosine</text>
        <dbReference type="Rhea" id="RHEA:20273"/>
        <dbReference type="ChEBI" id="CHEBI:15379"/>
        <dbReference type="ChEBI" id="CHEBI:15642"/>
        <dbReference type="ChEBI" id="CHEBI:58095"/>
        <dbReference type="ChEBI" id="CHEBI:58315"/>
        <dbReference type="ChEBI" id="CHEBI:59560"/>
        <dbReference type="EC" id="1.14.16.1"/>
    </reaction>
</comment>
<comment type="cofactor">
    <cofactor evidence="1">
        <name>Fe(2+)</name>
        <dbReference type="ChEBI" id="CHEBI:29033"/>
    </cofactor>
</comment>
<comment type="activity regulation">
    <text evidence="22 24">N-terminal region of PAH is thought to contain allosteric binding sites for phenylalanine and to constitute an 'inhibitory' domain that regulates the activity of a catalytic domain in the C-terminal portion of the molecule.</text>
</comment>
<comment type="biophysicochemical properties">
    <kinetics>
        <KM evidence="24">150 uM for L-phenylalanine</KM>
        <KM evidence="22">154 uM for L-phenylalanine (at 25 degrees Celsius)</KM>
        <KM evidence="24">30 uM for tetrahydrobiopterin (BH(4))</KM>
        <KM evidence="22">36 uM for tetrahydrobiopterin (BH(4)) (at 25 degrees Celsius)</KM>
        <Vmax evidence="22">3500.0 nmol/min/mg enzyme towards L-phenylalanine (at 25 degrees Celsius)</Vmax>
        <Vmax evidence="22">3600.0 nmol/min/mg enzyme towards tetrahydrobiopterin (BH(4)) (at 25 degrees Celsius)</Vmax>
        <Vmax evidence="24">3640.0 nmol/min/mg enzyme towards L-phenylalanine (preincubated with L-Phe)</Vmax>
        <Vmax evidence="24">1230.0 nmol/min/mg enzyme towards L-phenylalanine (preincubated with BH(4))</Vmax>
    </kinetics>
    <temperatureDependence>
        <text evidence="24">Optimum temperature is 50 degrees Celsius.</text>
    </temperatureDependence>
</comment>
<comment type="pathway">
    <text>Amino-acid degradation; L-phenylalanine degradation; acetoacetate and fumarate from L-phenylalanine: step 1/6.</text>
</comment>
<comment type="subunit">
    <text evidence="50">Homodimer and homotetramer.</text>
</comment>
<comment type="PTM">
    <text evidence="10">Phosphorylation at Ser-16 increases basal activity and facilitates activation by the substrate phenylalanine.</text>
</comment>
<comment type="polymorphism">
    <text>The Glu-274 variant occurs on approximately 4% of African-American PAH alleles. The enzyme activity of the variant protein is indistinguishable from that of the wild-type form.</text>
</comment>
<comment type="disease" evidence="3 4 5 6 7 8 9 11 12 13 14 15 16 17 18 19 20 21 23 25 26 27 28 29 30 31 32 33 34 35 36 37 39 40 41 42 43 44 45 46 47 48 49 51 52 53 54">
    <disease id="DI-02159">
        <name>Phenylalanine hydroxylase deficiency</name>
        <acronym>PAH deficiency</acronym>
        <description>An autosomal recessive inborn error of phenylalanine metabolism characterized by intolerance to dietary intake of the essential amino acid phenylalanine. The disease spectrum depends on the degree of PAH deficiency and the phenylalanine levels in plasma. Severe deficiency causes classic phenylketonuria (PKU) that is characterized by plasma concentrations of phenylalanine persistently above 1200 umol/L. PKU patients develop profound and irreversible intellectual disability, unless low phenylalanine diet is introduced early in life. They tend to have light pigmentation, rashes similar to eczema, epilepsy, extreme hyperactivity, psychotic states and an unpleasant 'mousy' odor. Less severe forms of PAH deficiency are characterized by phenylalanine levels above normal (120 umol/L) but below 1200 umol/L and include moderate PKU, mild PKU, non-PKU hyperphenylalaninemia (non-PKU HPA) and mild hyperphenylalaninemia. Individuals with PAH deficiency who have plasma phenylalanine concentrations consistently below 600 umol/L on an unrestricted diet are not at higher risk of developing intellectual, neurologic, and neuropsychological impairment than are individuals without PAH deficiency.</description>
        <dbReference type="MIM" id="261600"/>
    </disease>
    <text>The disease is caused by variants affecting the gene represented in this entry.</text>
</comment>
<comment type="similarity">
    <text evidence="55">Belongs to the biopterin-dependent aromatic amino acid hydroxylase family.</text>
</comment>
<comment type="online information" name="PAHvdb">
    <link uri="https://www.biopku.org/home/pah.asp"/>
    <text>Phenylalanine Hydroxylase Gene Locus-Specific Database</text>
</comment>
<comment type="online information" name="Wikipedia">
    <link uri="https://en.wikipedia.org/wiki/Phenylalanine_hydroxylase"/>
    <text>Phenylalanine hydroxylase entry</text>
</comment>